<accession>P25189</accession>
<accession>Q16072</accession>
<accession>Q5VTH4</accession>
<accession>Q92677</accession>
<accession>Q9BR67</accession>
<name>MYP0_HUMAN</name>
<comment type="function">
    <text evidence="12 42">Is an adhesion molecule necessary for normal myelination in the peripheral nervous system. It mediates adhesion between adjacent myelin wraps and ultimately drives myelin compaction.</text>
</comment>
<comment type="subunit">
    <text evidence="73">Homodimer and homotetramer.</text>
</comment>
<comment type="subcellular location">
    <subcellularLocation>
        <location evidence="42">Cell membrane</location>
        <topology>Single-pass type I membrane protein</topology>
    </subcellularLocation>
</comment>
<comment type="subcellular location">
    <molecule>Isoform L-MPZ</molecule>
    <subcellularLocation>
        <location evidence="44">Myelin membrane</location>
        <topology evidence="44">Single-pass type I membrane protein</topology>
    </subcellularLocation>
</comment>
<comment type="alternative products">
    <event type="alternative splicing"/>
    <isoform>
        <id>P25189-1</id>
        <name>1</name>
        <sequence type="displayed"/>
    </isoform>
    <isoform>
        <id>P25189-2</id>
        <name>L-MPZ</name>
        <sequence type="described" ref="VSP_045844"/>
    </isoform>
</comment>
<comment type="tissue specificity">
    <text>Found only in peripheral nervous system Schwann cells.</text>
</comment>
<comment type="PTM">
    <text evidence="1">N-glycosylated; contains sulfate-substituted glycan.</text>
</comment>
<comment type="disease" evidence="8 12 14 17 19 20 21 24 25 26 27 28 29 30 31 33 35 40 42 45 46 48 49 50 51 52 53 54 56 57 58 59 60 61 62 63 66 67 69 70 71">
    <disease id="DI-00269">
        <name>Charcot-Marie-Tooth disease, demyelinating, type 1B</name>
        <acronym>CMT1B</acronym>
        <description>A dominant demyelinating form of Charcot-Marie-Tooth disease, a disorder of the peripheral nervous system, characterized by progressive weakness and atrophy, initially of the peroneal muscles and later of the distal muscles of the arms. Charcot-Marie-Tooth disease is classified in two main groups on the basis of electrophysiologic properties and histopathology: primary peripheral demyelinating neuropathies (designated CMT1 when they are dominantly inherited) and primary peripheral axonal neuropathies (CMT2). Demyelinating neuropathies are characterized by severely reduced nerve conduction velocities (less than 38 m/sec), segmental demyelination and remyelination with onion bulb formations on nerve biopsy, slowly progressive distal muscle atrophy and weakness, absent deep tendon reflexes, and hollow feet.</description>
        <dbReference type="MIM" id="118200"/>
    </disease>
    <text>The disease is caused by variants affecting the gene represented in this entry.</text>
</comment>
<comment type="disease" evidence="15 24 27 28 32 34 38 68">
    <disease id="DI-00281">
        <name>Charcot-Marie-Tooth disease, axonal, type 2I</name>
        <acronym>CMT2I</acronym>
        <description>A dominant axonal form of Charcot-Marie-Tooth disease, a disorder of the peripheral nervous system, characterized by progressive weakness and atrophy, initially of the peroneal muscles and later of the distal muscles of the arms. Charcot-Marie-Tooth disease is classified in two main groups on the basis of electrophysiologic properties and histopathology: primary peripheral demyelinating neuropathies (designated CMT1 when they are dominantly inherited) and primary peripheral axonal neuropathies (CMT2). Neuropathies of the CMT2 group are characterized by signs of axonal degeneration in the absence of obvious myelin alterations, normal or slightly reduced nerve conduction velocities, and progressive distal muscle weakness and atrophy.</description>
        <dbReference type="MIM" id="607677"/>
    </disease>
    <text>The disease is caused by variants affecting the gene represented in this entry.</text>
</comment>
<comment type="disease" evidence="7 18 39 41">
    <disease id="DI-00282">
        <name>Charcot-Marie-Tooth disease, axonal, type 2J</name>
        <acronym>CMT2J</acronym>
        <description>A dominant axonal form of Charcot-Marie-Tooth disease, a disorder of the peripheral nervous system, characterized by progressive weakness and atrophy, initially of the peroneal muscles and later of the distal muscles of the arms. Charcot-Marie-Tooth disease is classified in two main groups on the basis of electrophysiologic properties and histopathology: primary peripheral demyelinating neuropathies (designated CMT1 when they are dominantly inherited) and primary peripheral axonal neuropathies (CMT2). Neuropathies of the CMT2 group are characterized by signs of axonal degeneration in the absence of obvious myelin alterations, normal or slightly reduced nerve conduction velocities, and progressive distal muscle weakness and atrophy. Charcot-Marie-Tooth disease type 2J is characterized by the association of axonal peripheral neuropathy with hearing loss and pupillary abnormalities such as Adie pupil.</description>
        <dbReference type="MIM" id="607736"/>
    </disease>
    <text>The disease is caused by variants affecting the gene represented in this entry.</text>
</comment>
<comment type="disease" evidence="41">
    <disease id="DI-01174">
        <name>Adie pupil</name>
        <acronym>ADIEP</acronym>
        <description>A stationary, benign disorder characterized by tonic, sluggishly reacting pupil and hypoactive or absent tendon reflexes. Adie pupil is a characteristic of Charcot-Marie-Tooth disease type 2J.</description>
        <dbReference type="MIM" id="103100"/>
    </disease>
    <text>The disease is caused by variants affecting the gene represented in this entry.</text>
</comment>
<comment type="disease" evidence="11 23">
    <disease id="DI-00266">
        <name>Charcot-Marie-Tooth disease, dominant intermediate D</name>
        <acronym>CMTDID</acronym>
        <description>A form of Charcot-Marie-Tooth disease, a disorder of the peripheral nervous system, characterized by progressive weakness and atrophy, initially of the peroneal muscles and later of the distal muscles of the arms. The dominant intermediate type D is characterized by clinical and pathologic features intermediate between demyelinating and axonal peripheral neuropathies, and motor median nerve conduction velocities ranging from 25 to 45 m/sec.</description>
        <dbReference type="MIM" id="607791"/>
    </disease>
    <text>The disease may be caused by variants affecting the gene represented in this entry.</text>
</comment>
<comment type="disease" evidence="20 22 24 29 47 55 58 62 64 65 66 69 70">
    <disease id="DI-00387">
        <name>Dejerine-Sottas syndrome</name>
        <acronym>DSS</acronym>
        <description>A severe degenerating neuropathy of the demyelinating Charcot-Marie-Tooth disease category, with onset by age 2 years. Characterized by motor and sensory neuropathy with very slow nerve conduction velocities, increased cerebrospinal fluid protein concentrations, hypertrophic nerve changes, delayed age of walking as well as areflexia. There are both autosomal dominant and autosomal recessive forms of Dejerine-Sottas syndrome.</description>
        <dbReference type="MIM" id="145900"/>
    </disease>
    <text>The disease is caused by variants affecting the gene represented in this entry.</text>
</comment>
<comment type="disease" evidence="13">
    <disease id="DI-02275">
        <name>Roussy-Levy syndrome</name>
        <acronym>ROULS</acronym>
        <description>Autosomal dominant disorder that resembles Charcot-Marie-Tooth disease type 1 in that it presents with foot deformity, weakness and atrophy of distal limb muscles, especially the peronei, and absent tendon reflexes. The phenotype differs, however, in that it includes static tremor of the upper limbs and gait ataxia.</description>
        <dbReference type="MIM" id="180800"/>
    </disease>
    <text>The disease is caused by variants affecting the gene represented in this entry.</text>
</comment>
<comment type="disease" evidence="9 37 58">
    <disease id="DI-05376">
        <name>Neuropathy, congenital hypomyelinating, 2</name>
        <acronym>CHN2</acronym>
        <description>A form of congenital hypomyelinating neuropathy, a neurologic disorder characterized by early-onset hypotonia, areflexia, distal muscle weakness, and very slow nerve conduction velocities (NCV) resulting from improper myelination of axons. In its extreme form, it may present with severe joint contractures or arthrogryposis multiplex congenita and respiratory insufficiency. In less severe cases patients may achieve walking. Patients lack both active myelin breakdown and well-organized onion bulbs on sural nerve biopsies, have absence of inflammation, and show hypomyelination of most or all fibers. CHN2 inheritance is autosomal dominant.</description>
        <dbReference type="MIM" id="618184"/>
    </disease>
    <text>The disease is caused by variants affecting the gene represented in this entry.</text>
</comment>
<comment type="miscellaneous">
    <molecule>Isoform L-MPZ</molecule>
    <text evidence="72">Based on a naturally occurring readthrough transcript. Highly antigenic.</text>
</comment>
<comment type="similarity">
    <text evidence="72">Belongs to the myelin P0 protein family.</text>
</comment>
<comment type="sequence caution" evidence="72">
    <conflict type="erroneous initiation">
        <sequence resource="EMBL-CDS" id="AAH06491"/>
    </conflict>
    <text>Extended N-terminus.</text>
</comment>
<comment type="sequence caution" evidence="72">
    <conflict type="erroneous initiation">
        <sequence resource="EMBL-CDS" id="AAP35411"/>
    </conflict>
    <text>Extended N-terminus.</text>
</comment>
<comment type="sequence caution" evidence="72">
    <conflict type="erroneous initiation">
        <sequence resource="EMBL-CDS" id="BAA03540"/>
    </conflict>
    <text>Extended N-terminus.</text>
</comment>
<comment type="sequence caution" evidence="72">
    <conflict type="erroneous initiation">
        <sequence resource="EMBL-CDS" id="BAG36330"/>
    </conflict>
    <text>Extended N-terminus.</text>
</comment>
<comment type="sequence caution" evidence="72">
    <conflict type="erroneous initiation">
        <sequence resource="EMBL-CDS" id="EAW52606"/>
    </conflict>
    <text>Extended N-terminus.</text>
</comment>
<comment type="online information" name="Inherited peripheral neuropathies mutation db">
    <link uri="https://uantwerpen.vib.be/CMTMutations"/>
</comment>
<feature type="signal peptide">
    <location>
        <begin position="1"/>
        <end position="29"/>
    </location>
</feature>
<feature type="chain" id="PRO_0000019300" description="Myelin protein P0">
    <location>
        <begin position="30"/>
        <end position="248"/>
    </location>
</feature>
<feature type="topological domain" description="Extracellular" evidence="4">
    <location>
        <begin position="30"/>
        <end position="153"/>
    </location>
</feature>
<feature type="transmembrane region" description="Helical" evidence="4">
    <location>
        <begin position="154"/>
        <end position="179"/>
    </location>
</feature>
<feature type="topological domain" description="Cytoplasmic" evidence="4">
    <location>
        <begin position="180"/>
        <end position="248"/>
    </location>
</feature>
<feature type="domain" description="Ig-like V-type">
    <location>
        <begin position="30"/>
        <end position="143"/>
    </location>
</feature>
<feature type="region of interest" description="Disordered" evidence="6">
    <location>
        <begin position="224"/>
        <end position="248"/>
    </location>
</feature>
<feature type="modified residue" description="Phosphoserine; by PKC" evidence="2">
    <location>
        <position position="210"/>
    </location>
</feature>
<feature type="modified residue" description="Phosphoserine" evidence="3">
    <location>
        <position position="226"/>
    </location>
</feature>
<feature type="modified residue" description="Phosphoserine" evidence="3">
    <location>
        <position position="228"/>
    </location>
</feature>
<feature type="modified residue" description="Phosphoserine; by PKC" evidence="2">
    <location>
        <position position="233"/>
    </location>
</feature>
<feature type="modified residue" description="Phosphoserine; by PKC" evidence="2">
    <location>
        <position position="243"/>
    </location>
</feature>
<feature type="glycosylation site" description="N-linked (GlcNAc...) (complex) asparagine" evidence="1">
    <location>
        <position position="122"/>
    </location>
</feature>
<feature type="disulfide bond" evidence="5 43">
    <location>
        <begin position="50"/>
        <end position="127"/>
    </location>
</feature>
<feature type="splice variant" id="VSP_045844" description="In isoform L-MPZ." evidence="72">
    <original>K</original>
    <variation>KRLAGRAGDRGLGVESAKGPKVMVIEMELRKDEQSPELRPAVKSPSRTSLKNALKNMMGLNSDK</variation>
    <location>
        <position position="248"/>
    </location>
</feature>
<feature type="sequence variant" id="VAR_004500" description="In CMT1B; dbSNP:rs770546306." evidence="54">
    <original>I</original>
    <variation>M</variation>
    <location>
        <position position="30"/>
    </location>
</feature>
<feature type="sequence variant" id="VAR_004501" description="In CMT1B; severe." evidence="16">
    <original>V</original>
    <variation>F</variation>
    <location>
        <position position="32"/>
    </location>
</feature>
<feature type="sequence variant" id="VAR_004502" description="In CMT1B." evidence="57">
    <original>T</original>
    <variation>I</variation>
    <location>
        <position position="34"/>
    </location>
</feature>
<feature type="sequence variant" id="VAR_015971" description="In CMT1B and CMTDID; dbSNP:rs121913596." evidence="11 28">
    <original>D</original>
    <variation>Y</variation>
    <location>
        <position position="35"/>
    </location>
</feature>
<feature type="sequence variant" id="VAR_054393" description="In CMT1B; slightly reduces intercellular adhesion; does not affect targeting to the cell membrane; dbSNP:rs371856018." evidence="33 42">
    <original>H</original>
    <variation>P</variation>
    <location>
        <position position="39"/>
    </location>
</feature>
<feature type="sequence variant" id="VAR_031884" description="In DSS." evidence="22">
    <location>
        <position position="42"/>
    </location>
</feature>
<feature type="sequence variant" id="VAR_004503" description="In CMT2I and CMT1B; dbSNP:rs121913598." evidence="33 68">
    <original>S</original>
    <variation>F</variation>
    <location>
        <position position="44"/>
    </location>
</feature>
<feature type="sequence variant" id="VAR_054394" description="In CMT1B." evidence="33">
    <location>
        <position position="50"/>
    </location>
</feature>
<feature type="sequence variant" id="VAR_054395" description="In CMT1B; affects targeting to the cell membrane; reduces intercellular adhesion." evidence="42">
    <location>
        <begin position="51"/>
        <end position="57"/>
    </location>
</feature>
<feature type="sequence variant" id="VAR_029971" description="In CMT1B; dbSNP:rs1553259790." evidence="19">
    <original>S</original>
    <variation>F</variation>
    <location>
        <position position="51"/>
    </location>
</feature>
<feature type="sequence variant" id="VAR_004504" description="In CMT1B; severe.">
    <original>S</original>
    <variation>C</variation>
    <location>
        <position position="54"/>
    </location>
</feature>
<feature type="sequence variant" id="VAR_004505" description="In CMT1B." evidence="71">
    <original>S</original>
    <variation>P</variation>
    <location>
        <position position="54"/>
    </location>
</feature>
<feature type="sequence variant" id="VAR_054396" description="In CMT2I." evidence="34">
    <original>E</original>
    <variation>K</variation>
    <location>
        <position position="56"/>
    </location>
</feature>
<feature type="sequence variant" id="VAR_004506" description="In CMT1B; moderate." evidence="67">
    <original>V</original>
    <variation>F</variation>
    <location>
        <position position="58"/>
    </location>
</feature>
<feature type="sequence variant" id="VAR_029972" description="In CMT2I; dbSNP:rs121913604." evidence="32">
    <original>D</original>
    <variation>H</variation>
    <location>
        <position position="60"/>
    </location>
</feature>
<feature type="sequence variant" id="VAR_031885" description="In CMT2I; dbSNP:rs786204119." evidence="15">
    <original>D</original>
    <variation>G</variation>
    <location>
        <position position="61"/>
    </location>
</feature>
<feature type="sequence variant" id="VAR_015972" description="In CMT1B; dbSNP:rs121913602." evidence="8 28">
    <original>I</original>
    <variation>F</variation>
    <location>
        <position position="62"/>
    </location>
</feature>
<feature type="sequence variant" id="VAR_029973" description="In CMT2I; dbSNP:rs121913605." evidence="32">
    <original>I</original>
    <variation>M</variation>
    <location>
        <position position="62"/>
    </location>
</feature>
<feature type="sequence variant" id="VAR_004508" description="In DSS; dbSNP:rs121913585." evidence="47">
    <original>S</original>
    <variation>C</variation>
    <location>
        <position position="63"/>
    </location>
</feature>
<feature type="sequence variant" id="VAR_004509" description="In CMT1B; dbSNP:rs121913585." evidence="20 59">
    <original>S</original>
    <variation>F</variation>
    <location>
        <position position="63"/>
    </location>
</feature>
<feature type="sequence variant" id="VAR_004507" description="In CMT1B." evidence="27 28 53">
    <location>
        <position position="63"/>
    </location>
</feature>
<feature type="sequence variant" id="VAR_004510" description="In CMT1B and DSS." evidence="55">
    <location>
        <position position="64"/>
    </location>
</feature>
<feature type="sequence variant" id="VAR_031886" description="In CMT1B; dbSNP:rs1553259760." evidence="35">
    <original>T</original>
    <variation>A</variation>
    <location>
        <position position="65"/>
    </location>
</feature>
<feature type="sequence variant" id="VAR_029974" description="In CMT1B." evidence="27">
    <original>T</original>
    <variation>I</variation>
    <location>
        <position position="65"/>
    </location>
</feature>
<feature type="sequence variant" id="VAR_004511" description="In CMT1B; severe/mild." evidence="16 27 28 67">
    <original>Y</original>
    <variation>C</variation>
    <location>
        <position position="68"/>
    </location>
</feature>
<feature type="sequence variant" id="VAR_015973" description="In CMT2J and CMT2I; dbSNP:rs121913597." evidence="18 27 28">
    <original>D</original>
    <variation>V</variation>
    <location>
        <position position="75"/>
    </location>
</feature>
<feature type="sequence variant" id="VAR_004512" description="In CMT1B; severe; dbSNP:rs121913601." evidence="17 19 24 29 48 50 62 69">
    <original>S</original>
    <variation>L</variation>
    <location>
        <position position="78"/>
    </location>
</feature>
<feature type="sequence variant" id="VAR_031887" description="In CMT1B; dbSNP:rs121913601." evidence="30">
    <original>S</original>
    <variation>W</variation>
    <location>
        <position position="78"/>
    </location>
</feature>
<feature type="sequence variant" id="VAR_004513" description="In CMT1B and CMT2I; severe; reduces intercellular adhesion; does not affect targeting to the cell membrane; dbSNP:rs121913594." evidence="28 42 61">
    <original>H</original>
    <variation>R</variation>
    <location>
        <position position="81"/>
    </location>
</feature>
<feature type="sequence variant" id="VAR_031888" description="In CMTDID; associated in cis with F-113; dbSNP:rs281865123." evidence="23">
    <original>H</original>
    <variation>Y</variation>
    <location>
        <position position="81"/>
    </location>
</feature>
<feature type="sequence variant" id="VAR_004514" description="In CMT1B and DSS; dbSNP:rs1553259707." evidence="24 27 46 69">
    <original>Y</original>
    <variation>C</variation>
    <location>
        <position position="82"/>
    </location>
</feature>
<feature type="sequence variant" id="VAR_015974" description="In CMT2I; patient carrying also Met-92 and Met-162; dbSNP:rs267607244." evidence="24">
    <original>I</original>
    <variation>N</variation>
    <location>
        <position position="89"/>
    </location>
</feature>
<feature type="sequence variant" id="VAR_004515" description="In CMT1B; dbSNP:rs121913584." evidence="52">
    <original>D</original>
    <variation>E</variation>
    <location>
        <position position="90"/>
    </location>
</feature>
<feature type="sequence variant" id="VAR_015975" description="In CMT2I; patient carrying also Asn-89 and Met-162; dbSNP:rs267607245." evidence="24">
    <original>V</original>
    <variation>M</variation>
    <location>
        <position position="92"/>
    </location>
</feature>
<feature type="sequence variant" id="VAR_004516" description="In CMT1B; dbSNP:rs1060503418." evidence="28 63">
    <original>G</original>
    <variation>E</variation>
    <location>
        <position position="93"/>
    </location>
</feature>
<feature type="sequence variant" id="VAR_004517" description="In CMT1B; dbSNP:rs121913583." evidence="45 52">
    <original>K</original>
    <variation>E</variation>
    <location>
        <position position="96"/>
    </location>
</feature>
<feature type="sequence variant" id="VAR_029975" description="In CMT2J; dbSNP:rs121913606." evidence="39">
    <original>E</original>
    <variation>V</variation>
    <location>
        <position position="97"/>
    </location>
</feature>
<feature type="sequence variant" id="VAR_004518" description="In CMT1B and DSS; severe; dbSNP:rs121913590." evidence="20 28 57 58 62">
    <original>R</original>
    <variation>C</variation>
    <location>
        <position position="98"/>
    </location>
</feature>
<feature type="sequence variant" id="VAR_004519" description="In CMT1B; dbSNP:rs121913589." evidence="14 19 26 33 51 57">
    <original>R</original>
    <variation>H</variation>
    <location>
        <position position="98"/>
    </location>
</feature>
<feature type="sequence variant" id="VAR_004520" description="In CMT1B; dbSNP:rs121913589.">
    <original>R</original>
    <variation>P</variation>
    <location>
        <position position="98"/>
    </location>
</feature>
<feature type="sequence variant" id="VAR_004521" description="In CMT1B." evidence="58">
    <original>R</original>
    <variation>S</variation>
    <location>
        <position position="98"/>
    </location>
</feature>
<feature type="sequence variant" id="VAR_004522" description="In CMT1B.">
    <original>I</original>
    <variation>T</variation>
    <location>
        <position position="99"/>
    </location>
</feature>
<feature type="sequence variant" id="VAR_004523" description="In CMT1B." evidence="50">
    <original>W</original>
    <variation>C</variation>
    <location>
        <position position="101"/>
    </location>
</feature>
<feature type="sequence variant" id="VAR_015976" description="In CMT1B; dbSNP:rs121913600." evidence="21">
    <original>G</original>
    <variation>E</variation>
    <location>
        <position position="103"/>
    </location>
</feature>
<feature type="sequence variant" id="VAR_031889" description="In CMT1B; dbSNP:rs1060503420." evidence="12">
    <original>D</original>
    <variation>N</variation>
    <location>
        <position position="109"/>
    </location>
</feature>
<feature type="sequence variant" id="VAR_029976" description="In DSS." evidence="29">
    <original>G</original>
    <variation>D</variation>
    <location>
        <position position="110"/>
    </location>
</feature>
<feature type="sequence variant" id="VAR_004524" description="In CMT1B; severe; dbSNP:rs1553259662." evidence="67">
    <original>I</original>
    <variation>T</variation>
    <location>
        <position position="112"/>
    </location>
</feature>
<feature type="sequence variant" id="VAR_031890" description="In CMTDID; associated in cis with Y-81; dbSNP:rs281865126." evidence="23">
    <original>V</original>
    <variation>F</variation>
    <location>
        <position position="113"/>
    </location>
</feature>
<feature type="sequence variant" id="VAR_029977" description="In CMT2I." evidence="27">
    <original>V</original>
    <variation>I</variation>
    <location>
        <position position="113"/>
    </location>
</feature>
<feature type="sequence variant" id="VAR_004525" description="In DSS; associated in cis with His-116 and Asn-128 in one patient; dbSNP:rs267607241." evidence="64">
    <original>I</original>
    <variation>T</variation>
    <location>
        <position position="114"/>
    </location>
</feature>
<feature type="sequence variant" id="VAR_004526" description="In DSS; associated in cis with Thr-114 and Asn-128 in one patient; dbSNP:rs267607242." evidence="64">
    <original>N</original>
    <variation>H</variation>
    <location>
        <position position="116"/>
    </location>
</feature>
<feature type="sequence variant" id="VAR_004527" description="In DSS." evidence="65">
    <original>D</original>
    <variation>DFY</variation>
    <location>
        <position position="118"/>
    </location>
</feature>
<feature type="sequence variant" id="VAR_021609" description="In CMT2I." evidence="38">
    <original>D</original>
    <variation>N</variation>
    <location>
        <position position="118"/>
    </location>
</feature>
<feature type="sequence variant" id="VAR_031891" description="In CMT2I; dbSNP:rs879254038." evidence="15">
    <original>Y</original>
    <variation>C</variation>
    <location>
        <position position="119"/>
    </location>
</feature>
<feature type="sequence variant" id="VAR_004528" description="In CMT1B; loss of glycosylation site." evidence="60">
    <original>N</original>
    <variation>S</variation>
    <location>
        <position position="122"/>
    </location>
</feature>
<feature type="sequence variant" id="VAR_015977" description="In DSS and CMT1B." evidence="24 33">
    <original>G</original>
    <variation>C</variation>
    <location>
        <position position="123"/>
    </location>
</feature>
<feature type="sequence variant" id="VAR_004530" description="In DSS." evidence="20 66">
    <location>
        <begin position="124"/>
        <end position="125"/>
    </location>
</feature>
<feature type="sequence variant" id="VAR_029978" description="In CHN2; dbSNP:rs121913595." evidence="37">
    <original>T</original>
    <variation>K</variation>
    <location>
        <position position="124"/>
    </location>
</feature>
<feature type="sequence variant" id="VAR_004529" description="In CMT1B, CMT2I and CMT2J; CMTJ2 patients present Adie pupil; slightly reduces intercellular adhesion; does not affect targeting to the cell membrane; affects glycosylation; dbSNP:rs121913595." evidence="7 10 16 18 20 27 28 36 41 42 66">
    <original>T</original>
    <variation>M</variation>
    <location>
        <position position="124"/>
    </location>
</feature>
<feature type="sequence variant" id="VAR_004531" description="In DSS." evidence="70">
    <original>C</original>
    <variation>Y</variation>
    <location>
        <position position="127"/>
    </location>
</feature>
<feature type="sequence variant" id="VAR_004532" description="In CMT1B." evidence="70">
    <original>D</original>
    <variation>E</variation>
    <location>
        <position position="128"/>
    </location>
</feature>
<feature type="sequence variant" id="VAR_004533" description="In DSS; associated in cis with Thr-114 and His-116 in one patient; dbSNP:rs267607243." evidence="64">
    <original>D</original>
    <variation>N</variation>
    <location>
        <position position="128"/>
    </location>
</feature>
<feature type="sequence variant" id="VAR_004534" description="In CMT1B, CMT2I and DSS; dbSNP:rs281865127." evidence="16 28 33 57">
    <original>K</original>
    <variation>R</variation>
    <location>
        <position position="130"/>
    </location>
</feature>
<feature type="sequence variant" id="VAR_015978" description="In ROULS; dbSNP:rs121913599." evidence="13">
    <original>N</original>
    <variation>K</variation>
    <location>
        <position position="131"/>
    </location>
</feature>
<feature type="sequence variant" id="VAR_004535" description="In CMT1B; moderate." evidence="67">
    <original>P</original>
    <variation>L</variation>
    <location>
        <position position="132"/>
    </location>
</feature>
<feature type="sequence variant" id="VAR_004536" description="In CMT1B." evidence="14 49">
    <original>D</original>
    <variation>E</variation>
    <location>
        <position position="134"/>
    </location>
</feature>
<feature type="sequence variant" id="VAR_029979" description="In CMT1B." evidence="14">
    <original>D</original>
    <variation>G</variation>
    <location>
        <position position="134"/>
    </location>
</feature>
<feature type="sequence variant" id="VAR_004537" description="In CMT1B; dbSNP:rs1553259647." evidence="48">
    <original>D</original>
    <variation>N</variation>
    <location>
        <position position="134"/>
    </location>
</feature>
<feature type="sequence variant" id="VAR_004538" description="In CMT1B and DSS; dbSNP:rs879253858." evidence="57">
    <original>I</original>
    <variation>L</variation>
    <location>
        <position position="135"/>
    </location>
</feature>
<feature type="sequence variant" id="VAR_004539" description="In CMT1B; dbSNP:rs121913587." evidence="14 56">
    <original>I</original>
    <variation>T</variation>
    <location>
        <position position="135"/>
    </location>
</feature>
<feature type="sequence variant" id="VAR_015979" description="In DSS." evidence="24">
    <original>V</original>
    <variation>E</variation>
    <location>
        <position position="136"/>
    </location>
</feature>
<feature type="sequence variant" id="VAR_004540" description="In CMT1B; dbSNP:rs121913588." evidence="56">
    <original>G</original>
    <variation>S</variation>
    <location>
        <position position="137"/>
    </location>
</feature>
<feature type="sequence variant" id="VAR_029980" description="In CMT1B." evidence="14">
    <original>K</original>
    <variation>N</variation>
    <location>
        <position position="138"/>
    </location>
</feature>
<feature type="sequence variant" id="VAR_029981" description="In CMT1B." evidence="14">
    <original>T</original>
    <variation>N</variation>
    <location>
        <position position="139"/>
    </location>
</feature>
<feature type="sequence variant" id="VAR_029982" description="In CMT1B; dbSNP:rs572010627." evidence="25 33">
    <original>S</original>
    <variation>T</variation>
    <location>
        <position position="140"/>
    </location>
</feature>
<feature type="sequence variant" id="VAR_004541" description="In CMT1B; dbSNP:rs750724650." evidence="70">
    <original>T</original>
    <variation>M</variation>
    <location>
        <position position="143"/>
    </location>
</feature>
<feature type="sequence variant" id="VAR_029983" description="In CMT1B; dbSNP:rs121913603." evidence="31">
    <original>Y</original>
    <variation>S</variation>
    <location>
        <position position="145"/>
    </location>
</feature>
<feature type="sequence variant" id="VAR_029984" description="In CMT1B." evidence="28">
    <original>V</original>
    <variation>F</variation>
    <location>
        <position position="146"/>
    </location>
</feature>
<feature type="sequence variant" id="VAR_015980" description="In CMT2I; patient carrying also Asn-89 and Met-92; dbSNP:rs267607246." evidence="24">
    <original>I</original>
    <variation>M</variation>
    <location>
        <position position="162"/>
    </location>
</feature>
<feature type="sequence variant" id="VAR_004542" description="In CMT1B; dbSNP:rs281865128." evidence="25 27">
    <original>G</original>
    <variation>R</variation>
    <location>
        <position position="163"/>
    </location>
</feature>
<feature type="sequence variant" id="VAR_004543" description="In CMT1B and DSS; severe." evidence="67">
    <original>G</original>
    <variation>A</variation>
    <location>
        <position position="167"/>
    </location>
</feature>
<feature type="sequence variant" id="VAR_004544" description="In CMT2I and DSS; dbSNP:rs121913586." evidence="28 47">
    <original>G</original>
    <variation>R</variation>
    <location>
        <position position="167"/>
    </location>
</feature>
<feature type="sequence variant" id="VAR_029985" description="In CMT1B." evidence="27">
    <original>L</original>
    <variation>R</variation>
    <location>
        <position position="170"/>
    </location>
</feature>
<feature type="sequence variant" id="VAR_081765" description="In CHN2." evidence="9 58">
    <location>
        <begin position="215"/>
        <end position="248"/>
    </location>
</feature>
<feature type="sequence variant" id="VAR_029986" description="In CMT1B." evidence="45">
    <original>T</original>
    <variation>ER</variation>
    <location>
        <position position="216"/>
    </location>
</feature>
<feature type="sequence variant" id="VAR_031892" description="In DSS." evidence="22">
    <original>A</original>
    <variation>T</variation>
    <location>
        <position position="221"/>
    </location>
</feature>
<feature type="sequence variant" id="VAR_054397" description="In CMT1B; also in two asymptomatic individuals from the same family; dbSNP:rs267607247." evidence="40">
    <original>D</original>
    <variation>Y</variation>
    <location>
        <position position="224"/>
    </location>
</feature>
<feature type="sequence variant" id="VAR_054398" description="In CMT1B." evidence="33">
    <original>R</original>
    <variation>S</variation>
    <location>
        <position position="227"/>
    </location>
</feature>
<feature type="sequence variant" id="VAR_021610" description="In CMT2I." evidence="38">
    <original>K</original>
    <variation>E</variation>
    <location>
        <position position="236"/>
    </location>
</feature>
<feature type="sequence variant" id="VAR_029987" description="In CMT1B." evidence="25">
    <location>
        <position position="236"/>
    </location>
</feature>
<feature type="sequence variant" id="VAR_004545" description="In dbSNP:rs749722729.">
    <original>R</original>
    <variation>L</variation>
    <location>
        <position position="244"/>
    </location>
</feature>
<feature type="strand" evidence="74">
    <location>
        <begin position="31"/>
        <end position="34"/>
    </location>
</feature>
<feature type="strand" evidence="74">
    <location>
        <begin position="36"/>
        <end position="41"/>
    </location>
</feature>
<feature type="strand" evidence="74">
    <location>
        <begin position="46"/>
        <end position="48"/>
    </location>
</feature>
<feature type="strand" evidence="74">
    <location>
        <begin position="50"/>
        <end position="53"/>
    </location>
</feature>
<feature type="strand" evidence="74">
    <location>
        <begin position="63"/>
        <end position="70"/>
    </location>
</feature>
<feature type="strand" evidence="74">
    <location>
        <begin position="77"/>
        <end position="83"/>
    </location>
</feature>
<feature type="strand" evidence="74">
    <location>
        <begin position="86"/>
        <end position="89"/>
    </location>
</feature>
<feature type="strand" evidence="74">
    <location>
        <begin position="91"/>
        <end position="93"/>
    </location>
</feature>
<feature type="turn" evidence="74">
    <location>
        <begin position="94"/>
        <end position="97"/>
    </location>
</feature>
<feature type="strand" evidence="74">
    <location>
        <begin position="99"/>
        <end position="101"/>
    </location>
</feature>
<feature type="helix" evidence="74">
    <location>
        <begin position="105"/>
        <end position="107"/>
    </location>
</feature>
<feature type="strand" evidence="74">
    <location>
        <begin position="112"/>
        <end position="114"/>
    </location>
</feature>
<feature type="helix" evidence="74">
    <location>
        <begin position="119"/>
        <end position="121"/>
    </location>
</feature>
<feature type="strand" evidence="74">
    <location>
        <begin position="123"/>
        <end position="130"/>
    </location>
</feature>
<feature type="strand" evidence="74">
    <location>
        <begin position="138"/>
        <end position="148"/>
    </location>
</feature>
<dbReference type="EMBL" id="D10537">
    <property type="protein sequence ID" value="BAA01395.1"/>
    <property type="molecule type" value="mRNA"/>
</dbReference>
<dbReference type="EMBL" id="D14720">
    <property type="protein sequence ID" value="BAA03540.1"/>
    <property type="status" value="ALT_INIT"/>
    <property type="molecule type" value="Genomic_DNA"/>
</dbReference>
<dbReference type="EMBL" id="L24893">
    <property type="protein sequence ID" value="AAA20656.1"/>
    <property type="molecule type" value="Genomic_DNA"/>
</dbReference>
<dbReference type="EMBL" id="L24894">
    <property type="protein sequence ID" value="AAA20656.1"/>
    <property type="status" value="JOINED"/>
    <property type="molecule type" value="Genomic_DNA"/>
</dbReference>
<dbReference type="EMBL" id="AK313555">
    <property type="protein sequence ID" value="BAG36330.1"/>
    <property type="status" value="ALT_INIT"/>
    <property type="molecule type" value="mRNA"/>
</dbReference>
<dbReference type="EMBL" id="BT006765">
    <property type="protein sequence ID" value="AAP35411.1"/>
    <property type="status" value="ALT_INIT"/>
    <property type="molecule type" value="mRNA"/>
</dbReference>
<dbReference type="EMBL" id="AL592295">
    <property type="status" value="NOT_ANNOTATED_CDS"/>
    <property type="molecule type" value="Genomic_DNA"/>
</dbReference>
<dbReference type="EMBL" id="CH471121">
    <property type="protein sequence ID" value="EAW52606.1"/>
    <property type="status" value="ALT_INIT"/>
    <property type="molecule type" value="Genomic_DNA"/>
</dbReference>
<dbReference type="EMBL" id="BC006491">
    <property type="protein sequence ID" value="AAH06491.1"/>
    <property type="status" value="ALT_INIT"/>
    <property type="molecule type" value="mRNA"/>
</dbReference>
<dbReference type="EMBL" id="S66705">
    <property type="protein sequence ID" value="AAB28708.1"/>
    <property type="molecule type" value="mRNA"/>
</dbReference>
<dbReference type="EMBL" id="U10018">
    <property type="protein sequence ID" value="AAA18981.1"/>
    <property type="molecule type" value="Genomic_DNA"/>
</dbReference>
<dbReference type="EMBL" id="U10017">
    <property type="protein sequence ID" value="AAA18981.1"/>
    <property type="status" value="JOINED"/>
    <property type="molecule type" value="Genomic_DNA"/>
</dbReference>
<dbReference type="CCDS" id="CCDS1229.2">
    <molecule id="P25189-1"/>
</dbReference>
<dbReference type="PIR" id="JH0252">
    <property type="entry name" value="JH0252"/>
</dbReference>
<dbReference type="RefSeq" id="NP_000521.2">
    <molecule id="P25189-1"/>
    <property type="nucleotide sequence ID" value="NM_000530.8"/>
</dbReference>
<dbReference type="RefSeq" id="NP_001302420.1">
    <property type="nucleotide sequence ID" value="NM_001315491.1"/>
</dbReference>
<dbReference type="PDB" id="3OAI">
    <property type="method" value="X-ray"/>
    <property type="resolution" value="2.10 A"/>
    <property type="chains" value="A/B=30-150"/>
</dbReference>
<dbReference type="PDB" id="8IIA">
    <property type="method" value="X-ray"/>
    <property type="resolution" value="2.09 A"/>
    <property type="chains" value="A=30-150"/>
</dbReference>
<dbReference type="PDBsum" id="3OAI"/>
<dbReference type="PDBsum" id="8IIA"/>
<dbReference type="SASBDB" id="P25189"/>
<dbReference type="SMR" id="P25189"/>
<dbReference type="BioGRID" id="110499">
    <property type="interactions" value="6"/>
</dbReference>
<dbReference type="FunCoup" id="P25189">
    <property type="interactions" value="1007"/>
</dbReference>
<dbReference type="IntAct" id="P25189">
    <property type="interactions" value="3"/>
</dbReference>
<dbReference type="TCDB" id="8.A.17.2.4">
    <property type="family name" value="the na(+) channel auxiliary subunit Beta1-Beta4 (sca-Beta) family"/>
</dbReference>
<dbReference type="UniLectin" id="P25189"/>
<dbReference type="GlyConnect" id="1526">
    <property type="glycosylation" value="15 N-Linked glycans (1 site)"/>
</dbReference>
<dbReference type="GlyCosmos" id="P25189">
    <property type="glycosylation" value="1 site, 15 glycans"/>
</dbReference>
<dbReference type="GlyGen" id="P25189">
    <property type="glycosylation" value="2 sites, 15 N-linked glycans (1 site)"/>
</dbReference>
<dbReference type="iPTMnet" id="P25189"/>
<dbReference type="PhosphoSitePlus" id="P25189"/>
<dbReference type="SwissPalm" id="P25189"/>
<dbReference type="BioMuta" id="MPZ"/>
<dbReference type="DMDM" id="127721"/>
<dbReference type="MassIVE" id="P25189"/>
<dbReference type="PaxDb" id="9606-ENSP00000432943"/>
<dbReference type="PeptideAtlas" id="P25189"/>
<dbReference type="ProteomicsDB" id="54264">
    <molecule id="P25189-1"/>
</dbReference>
<dbReference type="Antibodypedia" id="34307">
    <property type="antibodies" value="417 antibodies from 37 providers"/>
</dbReference>
<dbReference type="DNASU" id="4359"/>
<dbReference type="Ensembl" id="ENST00000463290.5">
    <molecule id="P25189-1"/>
    <property type="protein sequence ID" value="ENSP00000431538.1"/>
    <property type="gene ID" value="ENSG00000158887.20"/>
</dbReference>
<dbReference type="Ensembl" id="ENST00000533357.5">
    <molecule id="P25189-1"/>
    <property type="protein sequence ID" value="ENSP00000432943.1"/>
    <property type="gene ID" value="ENSG00000158887.20"/>
</dbReference>
<dbReference type="GeneID" id="4359"/>
<dbReference type="KEGG" id="hsa:4359"/>
<dbReference type="MANE-Select" id="ENST00000533357.5">
    <property type="protein sequence ID" value="ENSP00000432943.1"/>
    <property type="RefSeq nucleotide sequence ID" value="NM_000530.8"/>
    <property type="RefSeq protein sequence ID" value="NP_000521.2"/>
</dbReference>
<dbReference type="UCSC" id="uc001gaf.4">
    <molecule id="P25189-1"/>
    <property type="organism name" value="human"/>
</dbReference>
<dbReference type="AGR" id="HGNC:7225"/>
<dbReference type="CTD" id="4359"/>
<dbReference type="DisGeNET" id="4359"/>
<dbReference type="GeneCards" id="MPZ"/>
<dbReference type="HGNC" id="HGNC:7225">
    <property type="gene designation" value="MPZ"/>
</dbReference>
<dbReference type="HPA" id="ENSG00000158887">
    <property type="expression patterns" value="Tissue enhanced (brain)"/>
</dbReference>
<dbReference type="MalaCards" id="MPZ"/>
<dbReference type="MIM" id="103100">
    <property type="type" value="phenotype"/>
</dbReference>
<dbReference type="MIM" id="118200">
    <property type="type" value="phenotype"/>
</dbReference>
<dbReference type="MIM" id="145900">
    <property type="type" value="phenotype"/>
</dbReference>
<dbReference type="MIM" id="159440">
    <property type="type" value="gene"/>
</dbReference>
<dbReference type="MIM" id="180800">
    <property type="type" value="phenotype"/>
</dbReference>
<dbReference type="MIM" id="607677">
    <property type="type" value="phenotype"/>
</dbReference>
<dbReference type="MIM" id="607736">
    <property type="type" value="phenotype"/>
</dbReference>
<dbReference type="MIM" id="607791">
    <property type="type" value="phenotype"/>
</dbReference>
<dbReference type="MIM" id="618184">
    <property type="type" value="phenotype"/>
</dbReference>
<dbReference type="neXtProt" id="NX_P25189"/>
<dbReference type="OpenTargets" id="ENSG00000158887"/>
<dbReference type="Orphanet" id="99942">
    <property type="disease" value="Autosomal dominant Charcot-Marie-Tooth disease type 2I"/>
</dbReference>
<dbReference type="Orphanet" id="99943">
    <property type="disease" value="Autosomal dominant Charcot-Marie-Tooth disease type 2J"/>
</dbReference>
<dbReference type="Orphanet" id="100046">
    <property type="disease" value="Autosomal dominant intermediate Charcot-Marie-Tooth disease type D"/>
</dbReference>
<dbReference type="Orphanet" id="324585">
    <property type="disease" value="Autosomal dominant intermediate Charcot-Marie-Tooth disease with neuropathic pain"/>
</dbReference>
<dbReference type="Orphanet" id="101082">
    <property type="disease" value="Charcot-Marie-Tooth disease type 1B"/>
</dbReference>
<dbReference type="Orphanet" id="64748">
    <property type="disease" value="Dejerine-Sottas syndrome"/>
</dbReference>
<dbReference type="Orphanet" id="538574">
    <property type="disease" value="Palmoplantar keratoderma-hereditary motor and sensory neuropathy syndrome"/>
</dbReference>
<dbReference type="Orphanet" id="3115">
    <property type="disease" value="Roussy-Levy syndrome"/>
</dbReference>
<dbReference type="PharmGKB" id="PA30930"/>
<dbReference type="VEuPathDB" id="HostDB:ENSG00000158887"/>
<dbReference type="eggNOG" id="ENOG502QVJ0">
    <property type="taxonomic scope" value="Eukaryota"/>
</dbReference>
<dbReference type="GeneTree" id="ENSGT01030000234556"/>
<dbReference type="HOGENOM" id="CLU_090350_3_1_1"/>
<dbReference type="InParanoid" id="P25189"/>
<dbReference type="OMA" id="WVGDPHW"/>
<dbReference type="OrthoDB" id="9941287at2759"/>
<dbReference type="PAN-GO" id="P25189">
    <property type="GO annotations" value="2 GO annotations based on evolutionary models"/>
</dbReference>
<dbReference type="PhylomeDB" id="P25189"/>
<dbReference type="TreeFam" id="TF331728"/>
<dbReference type="PathwayCommons" id="P25189"/>
<dbReference type="Reactome" id="R-HSA-9619665">
    <property type="pathway name" value="EGR2 and SOX10-mediated initiation of Schwann cell myelination"/>
</dbReference>
<dbReference type="SignaLink" id="P25189"/>
<dbReference type="SIGNOR" id="P25189"/>
<dbReference type="BioGRID-ORCS" id="4359">
    <property type="hits" value="10 hits in 1158 CRISPR screens"/>
</dbReference>
<dbReference type="ChiTaRS" id="MPZ">
    <property type="organism name" value="human"/>
</dbReference>
<dbReference type="GeneWiki" id="Myelin_protein_zero"/>
<dbReference type="GenomeRNAi" id="4359"/>
<dbReference type="Pharos" id="P25189">
    <property type="development level" value="Tbio"/>
</dbReference>
<dbReference type="PRO" id="PR:P25189"/>
<dbReference type="Proteomes" id="UP000005640">
    <property type="component" value="Chromosome 1"/>
</dbReference>
<dbReference type="RNAct" id="P25189">
    <property type="molecule type" value="protein"/>
</dbReference>
<dbReference type="Bgee" id="ENSG00000158887">
    <property type="expression patterns" value="Expressed in tibial nerve and 107 other cell types or tissues"/>
</dbReference>
<dbReference type="ExpressionAtlas" id="P25189">
    <property type="expression patterns" value="baseline and differential"/>
</dbReference>
<dbReference type="GO" id="GO:0043209">
    <property type="term" value="C:myelin sheath"/>
    <property type="evidence" value="ECO:0007669"/>
    <property type="project" value="UniProtKB-SubCell"/>
</dbReference>
<dbReference type="GO" id="GO:0005886">
    <property type="term" value="C:plasma membrane"/>
    <property type="evidence" value="ECO:0000314"/>
    <property type="project" value="UniProtKB"/>
</dbReference>
<dbReference type="GO" id="GO:0045202">
    <property type="term" value="C:synapse"/>
    <property type="evidence" value="ECO:0007669"/>
    <property type="project" value="GOC"/>
</dbReference>
<dbReference type="GO" id="GO:0005198">
    <property type="term" value="F:structural molecule activity"/>
    <property type="evidence" value="ECO:0000303"/>
    <property type="project" value="ProtInc"/>
</dbReference>
<dbReference type="GO" id="GO:0098743">
    <property type="term" value="P:cell aggregation"/>
    <property type="evidence" value="ECO:0000315"/>
    <property type="project" value="UniProtKB"/>
</dbReference>
<dbReference type="GO" id="GO:0098742">
    <property type="term" value="P:cell-cell adhesion via plasma-membrane adhesion molecules"/>
    <property type="evidence" value="ECO:0000315"/>
    <property type="project" value="UniProtKB"/>
</dbReference>
<dbReference type="GO" id="GO:0007268">
    <property type="term" value="P:chemical synaptic transmission"/>
    <property type="evidence" value="ECO:0000304"/>
    <property type="project" value="ProtInc"/>
</dbReference>
<dbReference type="GO" id="GO:0042552">
    <property type="term" value="P:myelination"/>
    <property type="evidence" value="ECO:0000315"/>
    <property type="project" value="UniProtKB"/>
</dbReference>
<dbReference type="CDD" id="cd05879">
    <property type="entry name" value="IgV_P0"/>
    <property type="match status" value="1"/>
</dbReference>
<dbReference type="FunFam" id="2.60.40.10:FF:000193">
    <property type="entry name" value="Myelin protein zero-like 1 like"/>
    <property type="match status" value="1"/>
</dbReference>
<dbReference type="Gene3D" id="2.60.40.10">
    <property type="entry name" value="Immunoglobulins"/>
    <property type="match status" value="1"/>
</dbReference>
<dbReference type="InterPro" id="IPR007110">
    <property type="entry name" value="Ig-like_dom"/>
</dbReference>
<dbReference type="InterPro" id="IPR036179">
    <property type="entry name" value="Ig-like_dom_sf"/>
</dbReference>
<dbReference type="InterPro" id="IPR013783">
    <property type="entry name" value="Ig-like_fold"/>
</dbReference>
<dbReference type="InterPro" id="IPR003599">
    <property type="entry name" value="Ig_sub"/>
</dbReference>
<dbReference type="InterPro" id="IPR013106">
    <property type="entry name" value="Ig_V-set"/>
</dbReference>
<dbReference type="InterPro" id="IPR000920">
    <property type="entry name" value="Myelin_P0-rel"/>
</dbReference>
<dbReference type="InterPro" id="IPR019738">
    <property type="entry name" value="Myelin_P0_CS"/>
</dbReference>
<dbReference type="InterPro" id="IPR047014">
    <property type="entry name" value="Myelin_P0_Ig-like"/>
</dbReference>
<dbReference type="InterPro" id="IPR019566">
    <property type="entry name" value="MYP0_C"/>
</dbReference>
<dbReference type="PANTHER" id="PTHR13869">
    <property type="entry name" value="MYELIN P0 RELATED"/>
    <property type="match status" value="1"/>
</dbReference>
<dbReference type="PANTHER" id="PTHR13869:SF7">
    <property type="entry name" value="MYELIN PROTEIN P0"/>
    <property type="match status" value="1"/>
</dbReference>
<dbReference type="Pfam" id="PF10570">
    <property type="entry name" value="Myelin-PO_C"/>
    <property type="match status" value="1"/>
</dbReference>
<dbReference type="Pfam" id="PF07686">
    <property type="entry name" value="V-set"/>
    <property type="match status" value="1"/>
</dbReference>
<dbReference type="PRINTS" id="PR00213">
    <property type="entry name" value="MYELINP0"/>
</dbReference>
<dbReference type="SMART" id="SM00409">
    <property type="entry name" value="IG"/>
    <property type="match status" value="1"/>
</dbReference>
<dbReference type="SMART" id="SM00406">
    <property type="entry name" value="IGv"/>
    <property type="match status" value="1"/>
</dbReference>
<dbReference type="SUPFAM" id="SSF48726">
    <property type="entry name" value="Immunoglobulin"/>
    <property type="match status" value="1"/>
</dbReference>
<dbReference type="PROSITE" id="PS50835">
    <property type="entry name" value="IG_LIKE"/>
    <property type="match status" value="1"/>
</dbReference>
<dbReference type="PROSITE" id="PS00568">
    <property type="entry name" value="MYELIN_P0"/>
    <property type="match status" value="1"/>
</dbReference>
<sequence>MAPGAPSSSPSPILAVLLFSSLVLSPAQAIVVYTDREVHGAVGSRVTLHCSFWSSEWVSDDISFTWRYQPEGGRDAISIFHYAKGQPYIDEVGTFKERIQWVGDPRWKDGSIVIHNLDYSDNGTFTCDVKNPPDIVGKTSQVTLYVFEKVPTRYGVVLGAVIGGVLGVVLLLLLLFYVVRYCWLRRQAALQRRLSAMEKGKLHKPGKDASKRGRQTPVLYAMLDHSRSTKAVSEKKAKGLGESRKDKK</sequence>
<proteinExistence type="evidence at protein level"/>
<keyword id="KW-0002">3D-structure</keyword>
<keyword id="KW-0025">Alternative splicing</keyword>
<keyword id="KW-1003">Cell membrane</keyword>
<keyword id="KW-0144">Charcot-Marie-Tooth disease</keyword>
<keyword id="KW-0209">Deafness</keyword>
<keyword id="KW-0213">Dejerine-Sottas syndrome</keyword>
<keyword id="KW-0903">Direct protein sequencing</keyword>
<keyword id="KW-0225">Disease variant</keyword>
<keyword id="KW-1015">Disulfide bond</keyword>
<keyword id="KW-0325">Glycoprotein</keyword>
<keyword id="KW-0393">Immunoglobulin domain</keyword>
<keyword id="KW-0472">Membrane</keyword>
<keyword id="KW-0523">Neurodegeneration</keyword>
<keyword id="KW-0622">Neuropathy</keyword>
<keyword id="KW-0597">Phosphoprotein</keyword>
<keyword id="KW-1267">Proteomics identification</keyword>
<keyword id="KW-1185">Reference proteome</keyword>
<keyword id="KW-0732">Signal</keyword>
<keyword id="KW-0812">Transmembrane</keyword>
<keyword id="KW-1133">Transmembrane helix</keyword>
<organism>
    <name type="scientific">Homo sapiens</name>
    <name type="common">Human</name>
    <dbReference type="NCBI Taxonomy" id="9606"/>
    <lineage>
        <taxon>Eukaryota</taxon>
        <taxon>Metazoa</taxon>
        <taxon>Chordata</taxon>
        <taxon>Craniata</taxon>
        <taxon>Vertebrata</taxon>
        <taxon>Euteleostomi</taxon>
        <taxon>Mammalia</taxon>
        <taxon>Eutheria</taxon>
        <taxon>Euarchontoglires</taxon>
        <taxon>Primates</taxon>
        <taxon>Haplorrhini</taxon>
        <taxon>Catarrhini</taxon>
        <taxon>Hominidae</taxon>
        <taxon>Homo</taxon>
    </lineage>
</organism>
<protein>
    <recommendedName>
        <fullName>Myelin protein P0</fullName>
    </recommendedName>
    <alternativeName>
        <fullName>Myelin peripheral protein</fullName>
        <shortName>MPP</shortName>
    </alternativeName>
    <alternativeName>
        <fullName>Myelin protein zero</fullName>
    </alternativeName>
</protein>
<evidence type="ECO:0000250" key="1"/>
<evidence type="ECO:0000250" key="2">
    <source>
        <dbReference type="UniProtKB" id="P10522"/>
    </source>
</evidence>
<evidence type="ECO:0000250" key="3">
    <source>
        <dbReference type="UniProtKB" id="P27573"/>
    </source>
</evidence>
<evidence type="ECO:0000255" key="4"/>
<evidence type="ECO:0000255" key="5">
    <source>
        <dbReference type="PROSITE-ProRule" id="PRU00114"/>
    </source>
</evidence>
<evidence type="ECO:0000256" key="6">
    <source>
        <dbReference type="SAM" id="MobiDB-lite"/>
    </source>
</evidence>
<evidence type="ECO:0000269" key="7">
    <source>
    </source>
</evidence>
<evidence type="ECO:0000269" key="8">
    <source>
    </source>
</evidence>
<evidence type="ECO:0000269" key="9">
    <source>
    </source>
</evidence>
<evidence type="ECO:0000269" key="10">
    <source>
    </source>
</evidence>
<evidence type="ECO:0000269" key="11">
    <source>
    </source>
</evidence>
<evidence type="ECO:0000269" key="12">
    <source>
    </source>
</evidence>
<evidence type="ECO:0000269" key="13">
    <source>
    </source>
</evidence>
<evidence type="ECO:0000269" key="14">
    <source>
    </source>
</evidence>
<evidence type="ECO:0000269" key="15">
    <source>
    </source>
</evidence>
<evidence type="ECO:0000269" key="16">
    <source>
    </source>
</evidence>
<evidence type="ECO:0000269" key="17">
    <source>
    </source>
</evidence>
<evidence type="ECO:0000269" key="18">
    <source>
    </source>
</evidence>
<evidence type="ECO:0000269" key="19">
    <source>
    </source>
</evidence>
<evidence type="ECO:0000269" key="20">
    <source>
    </source>
</evidence>
<evidence type="ECO:0000269" key="21">
    <source>
    </source>
</evidence>
<evidence type="ECO:0000269" key="22">
    <source>
    </source>
</evidence>
<evidence type="ECO:0000269" key="23">
    <source>
    </source>
</evidence>
<evidence type="ECO:0000269" key="24">
    <source>
    </source>
</evidence>
<evidence type="ECO:0000269" key="25">
    <source>
    </source>
</evidence>
<evidence type="ECO:0000269" key="26">
    <source>
    </source>
</evidence>
<evidence type="ECO:0000269" key="27">
    <source>
    </source>
</evidence>
<evidence type="ECO:0000269" key="28">
    <source>
    </source>
</evidence>
<evidence type="ECO:0000269" key="29">
    <source>
    </source>
</evidence>
<evidence type="ECO:0000269" key="30">
    <source>
    </source>
</evidence>
<evidence type="ECO:0000269" key="31">
    <source>
    </source>
</evidence>
<evidence type="ECO:0000269" key="32">
    <source>
    </source>
</evidence>
<evidence type="ECO:0000269" key="33">
    <source>
    </source>
</evidence>
<evidence type="ECO:0000269" key="34">
    <source>
    </source>
</evidence>
<evidence type="ECO:0000269" key="35">
    <source>
    </source>
</evidence>
<evidence type="ECO:0000269" key="36">
    <source>
    </source>
</evidence>
<evidence type="ECO:0000269" key="37">
    <source>
    </source>
</evidence>
<evidence type="ECO:0000269" key="38">
    <source>
    </source>
</evidence>
<evidence type="ECO:0000269" key="39">
    <source>
    </source>
</evidence>
<evidence type="ECO:0000269" key="40">
    <source>
    </source>
</evidence>
<evidence type="ECO:0000269" key="41">
    <source>
    </source>
</evidence>
<evidence type="ECO:0000269" key="42">
    <source>
    </source>
</evidence>
<evidence type="ECO:0000269" key="43">
    <source>
    </source>
</evidence>
<evidence type="ECO:0000269" key="44">
    <source>
    </source>
</evidence>
<evidence type="ECO:0000269" key="45">
    <source>
    </source>
</evidence>
<evidence type="ECO:0000269" key="46">
    <source>
    </source>
</evidence>
<evidence type="ECO:0000269" key="47">
    <source>
    </source>
</evidence>
<evidence type="ECO:0000269" key="48">
    <source>
    </source>
</evidence>
<evidence type="ECO:0000269" key="49">
    <source>
    </source>
</evidence>
<evidence type="ECO:0000269" key="50">
    <source>
    </source>
</evidence>
<evidence type="ECO:0000269" key="51">
    <source>
    </source>
</evidence>
<evidence type="ECO:0000269" key="52">
    <source>
    </source>
</evidence>
<evidence type="ECO:0000269" key="53">
    <source>
    </source>
</evidence>
<evidence type="ECO:0000269" key="54">
    <source>
    </source>
</evidence>
<evidence type="ECO:0000269" key="55">
    <source>
    </source>
</evidence>
<evidence type="ECO:0000269" key="56">
    <source>
    </source>
</evidence>
<evidence type="ECO:0000269" key="57">
    <source>
    </source>
</evidence>
<evidence type="ECO:0000269" key="58">
    <source>
    </source>
</evidence>
<evidence type="ECO:0000269" key="59">
    <source>
    </source>
</evidence>
<evidence type="ECO:0000269" key="60">
    <source>
    </source>
</evidence>
<evidence type="ECO:0000269" key="61">
    <source>
    </source>
</evidence>
<evidence type="ECO:0000269" key="62">
    <source>
    </source>
</evidence>
<evidence type="ECO:0000269" key="63">
    <source>
    </source>
</evidence>
<evidence type="ECO:0000269" key="64">
    <source>
    </source>
</evidence>
<evidence type="ECO:0000269" key="65">
    <source>
    </source>
</evidence>
<evidence type="ECO:0000269" key="66">
    <source>
    </source>
</evidence>
<evidence type="ECO:0000269" key="67">
    <source>
    </source>
</evidence>
<evidence type="ECO:0000269" key="68">
    <source>
    </source>
</evidence>
<evidence type="ECO:0000269" key="69">
    <source>
    </source>
</evidence>
<evidence type="ECO:0000269" key="70">
    <source>
    </source>
</evidence>
<evidence type="ECO:0000269" key="71">
    <source ref="40"/>
</evidence>
<evidence type="ECO:0000305" key="72"/>
<evidence type="ECO:0000305" key="73">
    <source>
    </source>
</evidence>
<evidence type="ECO:0007829" key="74">
    <source>
        <dbReference type="PDB" id="8IIA"/>
    </source>
</evidence>
<reference key="1">
    <citation type="journal article" date="1991" name="Biochem. Biophys. Res. Commun.">
        <title>Isolation and sequence determination of cDNA encoding the major structural protein of human peripheral myelin.</title>
        <authorList>
            <person name="Hayasaka K."/>
            <person name="Nanao K."/>
            <person name="Tahara M."/>
            <person name="Sato W."/>
            <person name="Takada G."/>
            <person name="Miura M."/>
            <person name="Uyemura K."/>
        </authorList>
    </citation>
    <scope>NUCLEOTIDE SEQUENCE [MRNA] (ISOFORM 1)</scope>
    <source>
        <tissue>Fetal spinal cord</tissue>
    </source>
</reference>
<reference key="2">
    <citation type="journal article" date="1993" name="Biochem. Biophys. Res. Commun.">
        <title>Mutation of the myelin P0 gene in Charcot-Marie-Tooth neuropathy type 1.</title>
        <authorList>
            <person name="Hayasaka K."/>
            <person name="Ohnishi A."/>
            <person name="Takada G."/>
            <person name="Fukushima Y."/>
            <person name="Murai Y."/>
        </authorList>
    </citation>
    <scope>NUCLEOTIDE SEQUENCE [GENOMIC DNA / MRNA] (ISOFORM 1)</scope>
    <scope>VARIANT CMT1B HIS-98</scope>
    <source>
        <tissue>Spinal cord</tissue>
    </source>
</reference>
<reference key="3">
    <citation type="journal article" date="1993" name="Hum. Mol. Genet.">
        <title>The major peripheral myelin protein zero gene: structure and localization in the cluster of Fc gamma receptor genes on human chromosome 1q21.3-q23.</title>
        <authorList>
            <person name="Pham-Dinh D."/>
            <person name="Fourbil Y."/>
            <person name="Blanquet F."/>
            <person name="Mattei M.-G."/>
            <person name="Roeckel N."/>
            <person name="Latour P."/>
            <person name="Chazot G."/>
            <person name="Vandenberghe A."/>
            <person name="Dautigny A."/>
        </authorList>
    </citation>
    <scope>NUCLEOTIDE SEQUENCE [GENOMIC DNA]</scope>
</reference>
<reference key="4">
    <citation type="journal article" date="2004" name="Nat. Genet.">
        <title>Complete sequencing and characterization of 21,243 full-length human cDNAs.</title>
        <authorList>
            <person name="Ota T."/>
            <person name="Suzuki Y."/>
            <person name="Nishikawa T."/>
            <person name="Otsuki T."/>
            <person name="Sugiyama T."/>
            <person name="Irie R."/>
            <person name="Wakamatsu A."/>
            <person name="Hayashi K."/>
            <person name="Sato H."/>
            <person name="Nagai K."/>
            <person name="Kimura K."/>
            <person name="Makita H."/>
            <person name="Sekine M."/>
            <person name="Obayashi M."/>
            <person name="Nishi T."/>
            <person name="Shibahara T."/>
            <person name="Tanaka T."/>
            <person name="Ishii S."/>
            <person name="Yamamoto J."/>
            <person name="Saito K."/>
            <person name="Kawai Y."/>
            <person name="Isono Y."/>
            <person name="Nakamura Y."/>
            <person name="Nagahari K."/>
            <person name="Murakami K."/>
            <person name="Yasuda T."/>
            <person name="Iwayanagi T."/>
            <person name="Wagatsuma M."/>
            <person name="Shiratori A."/>
            <person name="Sudo H."/>
            <person name="Hosoiri T."/>
            <person name="Kaku Y."/>
            <person name="Kodaira H."/>
            <person name="Kondo H."/>
            <person name="Sugawara M."/>
            <person name="Takahashi M."/>
            <person name="Kanda K."/>
            <person name="Yokoi T."/>
            <person name="Furuya T."/>
            <person name="Kikkawa E."/>
            <person name="Omura Y."/>
            <person name="Abe K."/>
            <person name="Kamihara K."/>
            <person name="Katsuta N."/>
            <person name="Sato K."/>
            <person name="Tanikawa M."/>
            <person name="Yamazaki M."/>
            <person name="Ninomiya K."/>
            <person name="Ishibashi T."/>
            <person name="Yamashita H."/>
            <person name="Murakawa K."/>
            <person name="Fujimori K."/>
            <person name="Tanai H."/>
            <person name="Kimata M."/>
            <person name="Watanabe M."/>
            <person name="Hiraoka S."/>
            <person name="Chiba Y."/>
            <person name="Ishida S."/>
            <person name="Ono Y."/>
            <person name="Takiguchi S."/>
            <person name="Watanabe S."/>
            <person name="Yosida M."/>
            <person name="Hotuta T."/>
            <person name="Kusano J."/>
            <person name="Kanehori K."/>
            <person name="Takahashi-Fujii A."/>
            <person name="Hara H."/>
            <person name="Tanase T.-O."/>
            <person name="Nomura Y."/>
            <person name="Togiya S."/>
            <person name="Komai F."/>
            <person name="Hara R."/>
            <person name="Takeuchi K."/>
            <person name="Arita M."/>
            <person name="Imose N."/>
            <person name="Musashino K."/>
            <person name="Yuuki H."/>
            <person name="Oshima A."/>
            <person name="Sasaki N."/>
            <person name="Aotsuka S."/>
            <person name="Yoshikawa Y."/>
            <person name="Matsunawa H."/>
            <person name="Ichihara T."/>
            <person name="Shiohata N."/>
            <person name="Sano S."/>
            <person name="Moriya S."/>
            <person name="Momiyama H."/>
            <person name="Satoh N."/>
            <person name="Takami S."/>
            <person name="Terashima Y."/>
            <person name="Suzuki O."/>
            <person name="Nakagawa S."/>
            <person name="Senoh A."/>
            <person name="Mizoguchi H."/>
            <person name="Goto Y."/>
            <person name="Shimizu F."/>
            <person name="Wakebe H."/>
            <person name="Hishigaki H."/>
            <person name="Watanabe T."/>
            <person name="Sugiyama A."/>
            <person name="Takemoto M."/>
            <person name="Kawakami B."/>
            <person name="Yamazaki M."/>
            <person name="Watanabe K."/>
            <person name="Kumagai A."/>
            <person name="Itakura S."/>
            <person name="Fukuzumi Y."/>
            <person name="Fujimori Y."/>
            <person name="Komiyama M."/>
            <person name="Tashiro H."/>
            <person name="Tanigami A."/>
            <person name="Fujiwara T."/>
            <person name="Ono T."/>
            <person name="Yamada K."/>
            <person name="Fujii Y."/>
            <person name="Ozaki K."/>
            <person name="Hirao M."/>
            <person name="Ohmori Y."/>
            <person name="Kawabata A."/>
            <person name="Hikiji T."/>
            <person name="Kobatake N."/>
            <person name="Inagaki H."/>
            <person name="Ikema Y."/>
            <person name="Okamoto S."/>
            <person name="Okitani R."/>
            <person name="Kawakami T."/>
            <person name="Noguchi S."/>
            <person name="Itoh T."/>
            <person name="Shigeta K."/>
            <person name="Senba T."/>
            <person name="Matsumura K."/>
            <person name="Nakajima Y."/>
            <person name="Mizuno T."/>
            <person name="Morinaga M."/>
            <person name="Sasaki M."/>
            <person name="Togashi T."/>
            <person name="Oyama M."/>
            <person name="Hata H."/>
            <person name="Watanabe M."/>
            <person name="Komatsu T."/>
            <person name="Mizushima-Sugano J."/>
            <person name="Satoh T."/>
            <person name="Shirai Y."/>
            <person name="Takahashi Y."/>
            <person name="Nakagawa K."/>
            <person name="Okumura K."/>
            <person name="Nagase T."/>
            <person name="Nomura N."/>
            <person name="Kikuchi H."/>
            <person name="Masuho Y."/>
            <person name="Yamashita R."/>
            <person name="Nakai K."/>
            <person name="Yada T."/>
            <person name="Nakamura Y."/>
            <person name="Ohara O."/>
            <person name="Isogai T."/>
            <person name="Sugano S."/>
        </authorList>
    </citation>
    <scope>NUCLEOTIDE SEQUENCE [LARGE SCALE MRNA] (ISOFORM 1)</scope>
    <source>
        <tissue>Pericardium</tissue>
    </source>
</reference>
<reference key="5">
    <citation type="submission" date="2003-05" db="EMBL/GenBank/DDBJ databases">
        <title>Cloning of human full-length CDSs in BD Creator(TM) system donor vector.</title>
        <authorList>
            <person name="Kalnine N."/>
            <person name="Chen X."/>
            <person name="Rolfs A."/>
            <person name="Halleck A."/>
            <person name="Hines L."/>
            <person name="Eisenstein S."/>
            <person name="Koundinya M."/>
            <person name="Raphael J."/>
            <person name="Moreira D."/>
            <person name="Kelley T."/>
            <person name="LaBaer J."/>
            <person name="Lin Y."/>
            <person name="Phelan M."/>
            <person name="Farmer A."/>
        </authorList>
    </citation>
    <scope>NUCLEOTIDE SEQUENCE [LARGE SCALE MRNA] (ISOFORM 1)</scope>
</reference>
<reference key="6">
    <citation type="journal article" date="2006" name="Nature">
        <title>The DNA sequence and biological annotation of human chromosome 1.</title>
        <authorList>
            <person name="Gregory S.G."/>
            <person name="Barlow K.F."/>
            <person name="McLay K.E."/>
            <person name="Kaul R."/>
            <person name="Swarbreck D."/>
            <person name="Dunham A."/>
            <person name="Scott C.E."/>
            <person name="Howe K.L."/>
            <person name="Woodfine K."/>
            <person name="Spencer C.C.A."/>
            <person name="Jones M.C."/>
            <person name="Gillson C."/>
            <person name="Searle S."/>
            <person name="Zhou Y."/>
            <person name="Kokocinski F."/>
            <person name="McDonald L."/>
            <person name="Evans R."/>
            <person name="Phillips K."/>
            <person name="Atkinson A."/>
            <person name="Cooper R."/>
            <person name="Jones C."/>
            <person name="Hall R.E."/>
            <person name="Andrews T.D."/>
            <person name="Lloyd C."/>
            <person name="Ainscough R."/>
            <person name="Almeida J.P."/>
            <person name="Ambrose K.D."/>
            <person name="Anderson F."/>
            <person name="Andrew R.W."/>
            <person name="Ashwell R.I.S."/>
            <person name="Aubin K."/>
            <person name="Babbage A.K."/>
            <person name="Bagguley C.L."/>
            <person name="Bailey J."/>
            <person name="Beasley H."/>
            <person name="Bethel G."/>
            <person name="Bird C.P."/>
            <person name="Bray-Allen S."/>
            <person name="Brown J.Y."/>
            <person name="Brown A.J."/>
            <person name="Buckley D."/>
            <person name="Burton J."/>
            <person name="Bye J."/>
            <person name="Carder C."/>
            <person name="Chapman J.C."/>
            <person name="Clark S.Y."/>
            <person name="Clarke G."/>
            <person name="Clee C."/>
            <person name="Cobley V."/>
            <person name="Collier R.E."/>
            <person name="Corby N."/>
            <person name="Coville G.J."/>
            <person name="Davies J."/>
            <person name="Deadman R."/>
            <person name="Dunn M."/>
            <person name="Earthrowl M."/>
            <person name="Ellington A.G."/>
            <person name="Errington H."/>
            <person name="Frankish A."/>
            <person name="Frankland J."/>
            <person name="French L."/>
            <person name="Garner P."/>
            <person name="Garnett J."/>
            <person name="Gay L."/>
            <person name="Ghori M.R.J."/>
            <person name="Gibson R."/>
            <person name="Gilby L.M."/>
            <person name="Gillett W."/>
            <person name="Glithero R.J."/>
            <person name="Grafham D.V."/>
            <person name="Griffiths C."/>
            <person name="Griffiths-Jones S."/>
            <person name="Grocock R."/>
            <person name="Hammond S."/>
            <person name="Harrison E.S.I."/>
            <person name="Hart E."/>
            <person name="Haugen E."/>
            <person name="Heath P.D."/>
            <person name="Holmes S."/>
            <person name="Holt K."/>
            <person name="Howden P.J."/>
            <person name="Hunt A.R."/>
            <person name="Hunt S.E."/>
            <person name="Hunter G."/>
            <person name="Isherwood J."/>
            <person name="James R."/>
            <person name="Johnson C."/>
            <person name="Johnson D."/>
            <person name="Joy A."/>
            <person name="Kay M."/>
            <person name="Kershaw J.K."/>
            <person name="Kibukawa M."/>
            <person name="Kimberley A.M."/>
            <person name="King A."/>
            <person name="Knights A.J."/>
            <person name="Lad H."/>
            <person name="Laird G."/>
            <person name="Lawlor S."/>
            <person name="Leongamornlert D.A."/>
            <person name="Lloyd D.M."/>
            <person name="Loveland J."/>
            <person name="Lovell J."/>
            <person name="Lush M.J."/>
            <person name="Lyne R."/>
            <person name="Martin S."/>
            <person name="Mashreghi-Mohammadi M."/>
            <person name="Matthews L."/>
            <person name="Matthews N.S.W."/>
            <person name="McLaren S."/>
            <person name="Milne S."/>
            <person name="Mistry S."/>
            <person name="Moore M.J.F."/>
            <person name="Nickerson T."/>
            <person name="O'Dell C.N."/>
            <person name="Oliver K."/>
            <person name="Palmeiri A."/>
            <person name="Palmer S.A."/>
            <person name="Parker A."/>
            <person name="Patel D."/>
            <person name="Pearce A.V."/>
            <person name="Peck A.I."/>
            <person name="Pelan S."/>
            <person name="Phelps K."/>
            <person name="Phillimore B.J."/>
            <person name="Plumb R."/>
            <person name="Rajan J."/>
            <person name="Raymond C."/>
            <person name="Rouse G."/>
            <person name="Saenphimmachak C."/>
            <person name="Sehra H.K."/>
            <person name="Sheridan E."/>
            <person name="Shownkeen R."/>
            <person name="Sims S."/>
            <person name="Skuce C.D."/>
            <person name="Smith M."/>
            <person name="Steward C."/>
            <person name="Subramanian S."/>
            <person name="Sycamore N."/>
            <person name="Tracey A."/>
            <person name="Tromans A."/>
            <person name="Van Helmond Z."/>
            <person name="Wall M."/>
            <person name="Wallis J.M."/>
            <person name="White S."/>
            <person name="Whitehead S.L."/>
            <person name="Wilkinson J.E."/>
            <person name="Willey D.L."/>
            <person name="Williams H."/>
            <person name="Wilming L."/>
            <person name="Wray P.W."/>
            <person name="Wu Z."/>
            <person name="Coulson A."/>
            <person name="Vaudin M."/>
            <person name="Sulston J.E."/>
            <person name="Durbin R.M."/>
            <person name="Hubbard T."/>
            <person name="Wooster R."/>
            <person name="Dunham I."/>
            <person name="Carter N.P."/>
            <person name="McVean G."/>
            <person name="Ross M.T."/>
            <person name="Harrow J."/>
            <person name="Olson M.V."/>
            <person name="Beck S."/>
            <person name="Rogers J."/>
            <person name="Bentley D.R."/>
        </authorList>
    </citation>
    <scope>NUCLEOTIDE SEQUENCE [LARGE SCALE GENOMIC DNA]</scope>
</reference>
<reference key="7">
    <citation type="submission" date="2005-09" db="EMBL/GenBank/DDBJ databases">
        <authorList>
            <person name="Mural R.J."/>
            <person name="Istrail S."/>
            <person name="Sutton G.G."/>
            <person name="Florea L."/>
            <person name="Halpern A.L."/>
            <person name="Mobarry C.M."/>
            <person name="Lippert R."/>
            <person name="Walenz B."/>
            <person name="Shatkay H."/>
            <person name="Dew I."/>
            <person name="Miller J.R."/>
            <person name="Flanigan M.J."/>
            <person name="Edwards N.J."/>
            <person name="Bolanos R."/>
            <person name="Fasulo D."/>
            <person name="Halldorsson B.V."/>
            <person name="Hannenhalli S."/>
            <person name="Turner R."/>
            <person name="Yooseph S."/>
            <person name="Lu F."/>
            <person name="Nusskern D.R."/>
            <person name="Shue B.C."/>
            <person name="Zheng X.H."/>
            <person name="Zhong F."/>
            <person name="Delcher A.L."/>
            <person name="Huson D.H."/>
            <person name="Kravitz S.A."/>
            <person name="Mouchard L."/>
            <person name="Reinert K."/>
            <person name="Remington K.A."/>
            <person name="Clark A.G."/>
            <person name="Waterman M.S."/>
            <person name="Eichler E.E."/>
            <person name="Adams M.D."/>
            <person name="Hunkapiller M.W."/>
            <person name="Myers E.W."/>
            <person name="Venter J.C."/>
        </authorList>
    </citation>
    <scope>NUCLEOTIDE SEQUENCE [LARGE SCALE GENOMIC DNA]</scope>
</reference>
<reference key="8">
    <citation type="journal article" date="2004" name="Genome Res.">
        <title>The status, quality, and expansion of the NIH full-length cDNA project: the Mammalian Gene Collection (MGC).</title>
        <authorList>
            <consortium name="The MGC Project Team"/>
        </authorList>
    </citation>
    <scope>NUCLEOTIDE SEQUENCE [LARGE SCALE MRNA] (ISOFORM 1)</scope>
    <source>
        <tissue>Skin</tissue>
    </source>
</reference>
<reference key="9">
    <citation type="journal article" date="1993" name="Nat. Genet.">
        <title>Deletion of the serine 34 codon from the major peripheral myelin protein P0 gene in Charcot-Marie-Tooth disease type 1B.</title>
        <authorList>
            <person name="Kulkens T."/>
            <person name="Bolhuis P.A."/>
            <person name="Wolterman R.A."/>
            <person name="Kemp S."/>
            <person name="Te Nijenhuis S."/>
            <person name="Valentijn L.J."/>
            <person name="Hensels G.W."/>
            <person name="Jennekens F.G."/>
            <person name="de Visser M."/>
            <person name="Hoogendijk J.E."/>
            <person name="Baas F."/>
        </authorList>
    </citation>
    <scope>NUCLEOTIDE SEQUENCE [MRNA] OF 1-115 (ISOFORM 1)</scope>
    <scope>VARIANT CMT1B SER-63 DEL</scope>
</reference>
<reference key="10">
    <citation type="journal article" date="1994" name="J. Med. Genet.">
        <title>Linkage and mutation analysis in an extended family with Charcot-Marie-Tooth disease type 1B.</title>
        <authorList>
            <person name="Nelis E."/>
            <person name="Timmerman V."/>
            <person name="De Jonghe P."/>
            <person name="Muylle L."/>
            <person name="Martin J.-J."/>
            <person name="Van Broeckhoven C."/>
        </authorList>
    </citation>
    <scope>NUCLEOTIDE SEQUENCE [GENOMIC DNA] OF 24-248</scope>
    <scope>VARIANT CMT1B GLU-134</scope>
</reference>
<reference key="11">
    <citation type="journal article" date="2012" name="J. Biol. Chem.">
        <title>L-MPZ, a novel isoform of myelin P0, is produced by stop codon readthrough.</title>
        <authorList>
            <person name="Yamaguchi Y."/>
            <person name="Hayashi A."/>
            <person name="Campagnoni C.W."/>
            <person name="Kimura A."/>
            <person name="Inuzuka T."/>
            <person name="Baba H."/>
        </authorList>
    </citation>
    <scope>PARTIAL PROTEIN SEQUENCE (ISOFORM L-MPZ)</scope>
    <scope>ALTERNATIVE SPLICING</scope>
    <scope>SUBCELLULAR LOCATION (ISOFORM L-MPZ)</scope>
    <source>
        <tissue>PNS</tissue>
    </source>
</reference>
<reference key="12">
    <citation type="journal article" date="1994" name="Adv. Hum. Genet.">
        <title>Molecular genetics of Charcot-Marie-Tooth neuropathy.</title>
        <authorList>
            <person name="Roa B.B."/>
            <person name="Lupski J.R."/>
        </authorList>
    </citation>
    <scope>REVIEW ON CMT1B VARIANTS</scope>
</reference>
<reference key="13">
    <citation type="journal article" date="1994" name="Trends Genet.">
        <title>Charcot-Marie-Tooth disease: a new paradigm for the mechanism of inherited disease.</title>
        <authorList>
            <person name="Patel P.I."/>
            <person name="Lupski J.R."/>
        </authorList>
    </citation>
    <scope>REVIEW ON CMT1B VARIANTS</scope>
</reference>
<reference key="14">
    <citation type="journal article" date="2012" name="Proteins">
        <title>Crystal structure of the extracellular domain of human myelin protein zero.</title>
        <authorList>
            <person name="Liu Z."/>
            <person name="Wang Y."/>
            <person name="Yedidi R.S."/>
            <person name="Brunzelle J.S."/>
            <person name="Kovari I.A."/>
            <person name="Sohi J."/>
            <person name="Kamholz J."/>
            <person name="Kovari L.C."/>
        </authorList>
    </citation>
    <scope>X-RAY CRYSTALLOGRAPHY (2.1 ANGSTROMS) OF 30-150</scope>
    <scope>SUBUNIT</scope>
    <scope>DISULFIDE BOND</scope>
</reference>
<reference key="15">
    <citation type="journal article" date="1993" name="Hum. Mol. Genet.">
        <title>Mutation of the myelin P0 gene in Charcot-Marie-Tooth neuropathy type 1B.</title>
        <authorList>
            <person name="Hayasaka K."/>
            <person name="Takada G."/>
            <person name="Ionasescu V.V."/>
        </authorList>
    </citation>
    <scope>VARIANT CMT1B MET-30</scope>
</reference>
<reference key="16">
    <citation type="journal article" date="1993" name="Biochem. Mol. Biol. Int.">
        <title>New mutation of the myelin P0 gene in a pedigree of Charcot-Marie-Tooth neuropathy 1.</title>
        <authorList>
            <person name="Himoro M."/>
            <person name="Yoshikawa H."/>
            <person name="Matsui T."/>
            <person name="Mitsui Y."/>
            <person name="Takahashi M."/>
            <person name="Kaido M."/>
            <person name="Nishimura T."/>
            <person name="Sawaishi Y."/>
            <person name="Takada G."/>
            <person name="Hayasaka K."/>
        </authorList>
    </citation>
    <scope>VARIANT CMT1B CYS-82</scope>
</reference>
<reference key="17">
    <citation type="journal article" date="1993" name="Nat. Genet.">
        <title>Charcot-Marie-Tooth neuropathy type 1B is associated with mutations of the myelin P0 gene.</title>
        <authorList>
            <person name="Hayasaka K."/>
            <person name="Himoro M."/>
            <person name="Sato W."/>
            <person name="Takada G."/>
            <person name="Uyemura K."/>
            <person name="Shimizu N."/>
            <person name="Bird T.D."/>
            <person name="Conneally P.M."/>
            <person name="Chance P.F."/>
        </authorList>
    </citation>
    <scope>VARIANTS CMT1B GLU-90 AND GLU-96</scope>
</reference>
<reference key="18">
    <citation type="journal article" date="1993" name="Proc. Natl. Acad. Sci. U.S.A.">
        <title>Myelin protein zero gene mutated in Charcot-Marie-Tooth type 1B patients.</title>
        <authorList>
            <person name="Su Y."/>
            <person name="Brooks D.G."/>
            <person name="Li L."/>
            <person name="Lepercq J."/>
            <person name="Trofatter J.A."/>
            <person name="Ravetch J.V."/>
            <person name="Lebo R.V."/>
        </authorList>
    </citation>
    <scope>VARIANTS CMT1B GLU-96 AND THR-216 DELINS GLU-ARG</scope>
</reference>
<reference key="19">
    <citation type="journal article" date="1993" name="Nat. Genet.">
        <title>De novo mutation of the myelin P0 gene in Dejerine-Sottas disease (hereditary motor and sensory neuropathy type III).</title>
        <authorList>
            <person name="Hayasaka K."/>
            <person name="Himoro M."/>
            <person name="Sawaishi Y."/>
            <person name="Nanao K."/>
            <person name="Takahashi T."/>
            <person name="Takada G."/>
            <person name="Nicholson G.A."/>
            <person name="Ouvrier R.A."/>
            <person name="Tachi N."/>
        </authorList>
    </citation>
    <scope>VARIANTS DSS CYS-63 AND ARG-167</scope>
</reference>
<reference key="20">
    <citation type="journal article" date="1994" name="Hum. Genet.">
        <title>Rapid screening of myelin genes in CMT1 patients by SSCP analysis: identification of new mutations and polymorphisms in the P0 gene.</title>
        <authorList>
            <person name="Nelis E."/>
            <person name="Timmerman V."/>
            <person name="de Jonghe P."/>
            <person name="Vandenberghe A."/>
            <person name="Pham-Dinh D."/>
            <person name="Dautigny A."/>
            <person name="Martin J.-J."/>
            <person name="van Broeckhoven C."/>
        </authorList>
    </citation>
    <scope>VARIANTS CMT1B LEU-78 AND ASN-134</scope>
</reference>
<reference key="21">
    <citation type="journal article" date="1995" name="Clin. Genet.">
        <title>Charcot-Marie-Tooth type 1B neuropathy: third mutation of serine 63 codon in the major peripheral myelin glycoprotein PO gene.</title>
        <authorList>
            <person name="Blanquet-Grossard F."/>
            <person name="Pham-Dinh D."/>
            <person name="Dautigny A."/>
            <person name="Latour P."/>
            <person name="Bonnebouche C."/>
            <person name="Corbillon E."/>
            <person name="Chazot G."/>
            <person name="Vandenberghe A."/>
        </authorList>
    </citation>
    <scope>VARIANT CMT1B PHE-63</scope>
</reference>
<reference key="22">
    <citation type="journal article" date="1995" name="Hum. Mutat.">
        <title>Mutations in the myelin protein zero gene associated with Charcot-Marie-Tooth disease type 1B.</title>
        <authorList>
            <person name="Latour P."/>
            <person name="Blanquet F."/>
            <person name="Nelis E."/>
            <person name="Bonnebouche C."/>
            <person name="Chapon F."/>
            <person name="Diraison P."/>
            <person name="Ollagnon E."/>
            <person name="Dautigny A."/>
            <person name="Pham-Dinh D."/>
            <person name="Chazot G."/>
            <person name="Boucherat M."/>
            <person name="van Broeckhoven C."/>
            <person name="Vandenberghe A."/>
        </authorList>
    </citation>
    <scope>VARIANTS CMT1B LEU-78 AND CYS-101</scope>
</reference>
<reference key="23">
    <citation type="journal article" date="1996" name="Biochem. Biophys. Res. Commun.">
        <title>A novel homozygous mutation of the myelin Po gene producing Dejerine-Sottas disease (hereditary motor and sensory neuropathy type III).</title>
        <authorList>
            <person name="Ikegami T."/>
            <person name="Nicholson G.A."/>
            <person name="Ikeda H."/>
            <person name="Ishida A."/>
            <person name="Johnston H."/>
            <person name="Wise G."/>
            <person name="Ouvrier R.A."/>
            <person name="Hayasaka K."/>
        </authorList>
    </citation>
    <scope>VARIANT DSS PHE-64 DEL</scope>
</reference>
<reference key="24">
    <citation type="journal article" date="1996" name="Hum. Mutat.">
        <title>Myelin protein zero (MPZ) gene mutations in nonduplication type 1 Charcot-Marie-Tooth disease.</title>
        <authorList>
            <person name="Roa B.B."/>
            <person name="Warner L.E."/>
            <person name="Garcia C.A."/>
            <person name="Russo D."/>
            <person name="Lovelace R."/>
            <person name="Chance P.F."/>
            <person name="Lupski J.R."/>
        </authorList>
    </citation>
    <scope>VARIANTS CMT1B THR-135 AND SER-137</scope>
</reference>
<reference key="25">
    <citation type="journal article" date="1996" name="Hum. Mutat.">
        <title>Charcot-Marie-Tooth type 1B neuropathy: a mutation at the single glycosylation site in the major peripheral myelin glycoprotein Po.</title>
        <authorList>
            <person name="Blanquet-Grossard F."/>
            <person name="Pham-Dinh D."/>
            <person name="Dautigny A."/>
            <person name="Latour P."/>
            <person name="Bonnebouche C."/>
            <person name="Diraison P."/>
            <person name="Chapon F."/>
            <person name="Chazot G."/>
            <person name="Vandenberghe A."/>
        </authorList>
    </citation>
    <scope>VARIANT CMT1B SER-122</scope>
</reference>
<reference key="26">
    <citation type="journal article" date="1996" name="Neurology">
        <title>Two divergent types of nerve pathology in patients with different P0 mutations in Charcot-Marie-Tooth disease.</title>
        <authorList>
            <person name="Gabreeels-Festen A.A.W.M."/>
            <person name="Hoogendijk J.E."/>
            <person name="Meijerink P.H."/>
            <person name="Gabreeels F.J.M."/>
            <person name="Bolhuis P.A."/>
            <person name="van Beersum S."/>
            <person name="Kulkens T."/>
            <person name="Nelis E."/>
            <person name="Jennekens F.G."/>
            <person name="de Visser M."/>
            <person name="van Engelen B.G."/>
            <person name="van Broeckhoven C."/>
            <person name="Mariman E.C."/>
        </authorList>
    </citation>
    <scope>VARIANTS CMT1B/DSS ILE-34; CYS-98; HIS-98; ARG-130 AND LEU-135</scope>
</reference>
<reference key="27">
    <citation type="journal article" date="1996" name="Neuron">
        <title>Clinical phenotypes of different MPZ (P0) mutations may include Charcot-Marie-Tooth type 1B, Dejerine-Sottas, and congenital hypomyelination.</title>
        <authorList>
            <person name="Warner L.E."/>
            <person name="Hilz M.J."/>
            <person name="Appel S.H."/>
            <person name="Killian J.M."/>
            <person name="Kolodry E.H."/>
            <person name="Karpati G."/>
            <person name="Carpenter S."/>
            <person name="Watters G.V."/>
            <person name="Wheeler C."/>
            <person name="Witt D."/>
            <person name="Bodell A."/>
            <person name="Nelis E."/>
            <person name="van Broeckhoven C."/>
            <person name="Lupski J.R."/>
        </authorList>
    </citation>
    <scope>VARIANTS CMT1B CYS-98 AND SER-98</scope>
    <scope>VARIANT DSS CYS-98</scope>
    <scope>VARIANT CHN2 215-GLN--LYS-248 DEL</scope>
</reference>
<reference key="28">
    <citation type="journal article" date="1997" name="Am. J. Med. Genet.">
        <title>Novel mutation of the myelin Po gene in a pedigree with Charcot-Marie-Tooth disease type 1B.</title>
        <authorList>
            <person name="Ikegami T."/>
            <person name="Ikeda H."/>
            <person name="Mitsui T."/>
            <person name="Hayasaka K."/>
            <person name="Ishii S."/>
        </authorList>
    </citation>
    <scope>VARIANT CMT1B GLU-93</scope>
</reference>
<reference key="29">
    <citation type="journal article" date="1997" name="Hum. Genet.">
        <title>Mutational analysis of the MPZ, PMP22 and Cx32 genes in patients of Spanish ancestry with Charcot-Marie-Tooth disease and hereditary neuropathy with liability to pressure palsies.</title>
        <authorList>
            <person name="Bort S."/>
            <person name="Nelis E."/>
            <person name="Timmerman V."/>
            <person name="Sevilla T."/>
            <person name="Cruz-Martinez A."/>
            <person name="Martinez F."/>
            <person name="Millan J.M."/>
            <person name="Arpa J."/>
            <person name="Vilchez J.J."/>
            <person name="Prieto F."/>
            <person name="van Broeckhoven C."/>
            <person name="Palau F."/>
        </authorList>
    </citation>
    <scope>VARIANT CMT1B LEU-78</scope>
    <scope>VARIANT DSS CYS-98</scope>
</reference>
<reference key="30">
    <citation type="journal article" date="1997" name="Hum. Mutat.">
        <title>Novel mutation of the myelin P0 gene in a CMT1B family.</title>
        <authorList>
            <person name="Sorour E."/>
            <person name="Macmillan J."/>
            <person name="Upadhyaya M."/>
        </authorList>
    </citation>
    <scope>VARIANT CMT1B ARG-81</scope>
</reference>
<reference key="31">
    <citation type="journal article" date="1997" name="Hum. Mutat.">
        <title>Multiple de novo MPZ (P0) point mutations in a sporadic Dejerine-Sottas case.</title>
        <authorList>
            <person name="Warner L.E."/>
            <person name="Shohat M."/>
            <person name="Shorer Z."/>
            <person name="Lupski J.R."/>
        </authorList>
    </citation>
    <scope>VARIANTS DSS THR-114; HIS-116 AND ASN-128</scope>
</reference>
<reference key="32">
    <citation type="journal article" date="1998" name="Hum. Mutat. Suppl.">
        <title>De novo mutation of the myelin P0 gene in Dejerine-Sottas disease (hereditary motor and sensory neuropathy type III): two amino acid insertion after Asp 118.</title>
        <authorList>
            <person name="Ikegami T."/>
            <person name="Nicholson G.A."/>
            <person name="Ikeda H."/>
            <person name="Ishida A."/>
            <person name="Johnston H."/>
            <person name="Wise G."/>
            <person name="Ouvrier R.A."/>
            <person name="Hayasaka K."/>
        </authorList>
    </citation>
    <scope>VARIANT DSS PHE-TYR-118 INS</scope>
</reference>
<reference key="33">
    <citation type="journal article" date="1998" name="Hum. Mutat. Suppl.">
        <title>Mutations of the same sequence of the myelin P0 gene causing two different phenotypes.</title>
        <authorList>
            <person name="Schiavon F."/>
            <person name="Rampazzo A."/>
            <person name="Merlini L."/>
            <person name="Angelini C."/>
            <person name="Mostacciuolo M.L."/>
        </authorList>
    </citation>
    <scope>VARIANT CMT1B MET-124</scope>
    <scope>VARIANT DSS 124-THR-PHE-125 DEL</scope>
</reference>
<reference key="34">
    <citation type="journal article" date="1998" name="Hum. Mutat. Suppl.">
        <title>Mutation analysis in Charcot-Marie-Tooth disease type 1 (CMT1).</title>
        <authorList>
            <person name="Sorour E."/>
            <person name="Upadhyaya M."/>
        </authorList>
    </citation>
    <scope>VARIANTS CMT1B PHE-58; CYS-68; THR-112; LEU-132 AND ALA-167</scope>
</reference>
<reference key="35">
    <citation type="journal article" date="1998" name="Hum. Mutat.">
        <title>Spectrum of mutations in Finnish patients with Charcot-Marie-Tooth disease and related neuropathies.</title>
        <authorList>
            <person name="Silander K."/>
            <person name="Meretoja P."/>
            <person name="Juvonen V."/>
            <person name="Ignatius J."/>
            <person name="Pihko H."/>
            <person name="Saarinen A."/>
            <person name="Wallden T."/>
            <person name="Herrgaard E."/>
            <person name="Aula P."/>
            <person name="Savontaus M.-L."/>
        </authorList>
    </citation>
    <scope>VARIANT CMT1B LEU-78</scope>
    <scope>VARIANT DSS CYS-82</scope>
</reference>
<reference key="36">
    <citation type="journal article" date="1998" name="Neurology">
        <title>Charcot-Marie-Tooth disease type 2 associated with mutation of the myelin protein zero gene.</title>
        <authorList>
            <person name="Marrosu M.G."/>
            <person name="Vaccargiu S."/>
            <person name="Marrosu G."/>
            <person name="Vannelli A."/>
            <person name="Cianchetti C."/>
            <person name="Muntoni F."/>
        </authorList>
    </citation>
    <scope>VARIANT CMT2I PHE-44</scope>
</reference>
<reference key="37">
    <citation type="journal article" date="1999" name="Ann. Neurol.">
        <title>Congenital hypomyelination due to myelin protein zero Q215X mutation.</title>
        <authorList>
            <person name="Mandich P."/>
            <person name="Mancardi G.L."/>
            <person name="Varese A."/>
            <person name="Soriani S."/>
            <person name="Di Maria E."/>
            <person name="Bellone E."/>
            <person name="Bado M."/>
            <person name="Gross L."/>
            <person name="Windebank A.J."/>
            <person name="Ajmar F."/>
            <person name="Schenone A."/>
        </authorList>
    </citation>
    <scope>VARIANT CHN2 215-GLN--LYS-248 DEL</scope>
    <scope>INVOLVEMENT IN CHN2</scope>
</reference>
<reference key="38">
    <citation type="journal article" date="1999" name="Ann. Neurol.">
        <title>The Roussy-Levy family: from the original description to the gene.</title>
        <authorList>
            <person name="Plante-Bordeneuve V."/>
            <person name="Guiochon-Mantel A."/>
            <person name="Lacroix C."/>
            <person name="Lapresle J."/>
            <person name="Said G."/>
        </authorList>
    </citation>
    <scope>VARIANT ROULS LYS-131</scope>
</reference>
<reference key="39">
    <citation type="journal article" date="1999" name="Brain">
        <title>The Thr124Met mutation in the peripheral myelin protein zero (MPZ) gene is associated with a clinically distinct Charcot-Marie-Tooth phenotype.</title>
        <authorList>
            <person name="De Jonghe P."/>
            <person name="Timmerman V."/>
            <person name="Ceuterick C."/>
            <person name="Nelis E."/>
            <person name="De Vriendt E."/>
            <person name="Lofgren A."/>
            <person name="Vercruyssen A."/>
            <person name="Verellen C."/>
            <person name="Van Maldergem L."/>
            <person name="Martin J.-J."/>
            <person name="Van Broeckhoven C."/>
        </authorList>
    </citation>
    <scope>VARIANT CMT2J MET-124</scope>
</reference>
<reference key="40">
    <citation type="journal article" date="1999" name="Eur. J. Hum. Genet. Suppl.">
        <title>Novel mutations of the myelin P0 gene in two Charcot-Marie-Tooth type 1 patients from Turkey.</title>
        <authorList>
            <person name="Bissar-Tadmouri N."/>
            <person name="Latour P."/>
            <person name="Gulsen-Parman Y."/>
            <person name="Deymeer F."/>
            <person name="Serdaroglu P."/>
            <person name="Ozdemir C."/>
            <person name="Vandenberghe A."/>
        </authorList>
    </citation>
    <scope>VARIANT CMT1B PRO-54</scope>
</reference>
<reference key="41">
    <citation type="journal article" date="1999" name="Hum. Mutat.">
        <title>Mutations in the peripheral myelin genes and associated genes in inherited peripheral neuropathies.</title>
        <authorList>
            <person name="Nelis E."/>
            <person name="Haites N."/>
            <person name="van Broeckhoven C."/>
        </authorList>
    </citation>
    <scope>VARIANT DSS TYR-127</scope>
    <scope>VARIANTS CMT1B GLU-128 AND MET-143</scope>
</reference>
<reference key="42">
    <citation type="journal article" date="1999" name="J. Neurol. Neurosurg. Psych.">
        <title>Axonal phenotype of Charcot-Marie-Tooth disease associated with a mutation in the myelin protein zero gene.</title>
        <authorList>
            <person name="Chapon F."/>
            <person name="Latour P."/>
            <person name="Diraison P."/>
            <person name="Schaeffer S."/>
            <person name="Vandenberghe A."/>
        </authorList>
    </citation>
    <scope>VARIANT CMT2 MET-124</scope>
</reference>
<reference key="43">
    <citation type="journal article" date="1999" name="J. Neurol. Neurosurg. Psych.">
        <title>Novel mutation in the myelin protein zero gene in a family with intermediate hereditary motor and sensory neuropathy.</title>
        <authorList>
            <person name="Mastaglia F.L."/>
            <person name="Nowak K.J."/>
            <person name="Stell R."/>
            <person name="Phillips B.A."/>
            <person name="Edmondston J.E."/>
            <person name="Dorosz S.M."/>
            <person name="Wilton S.D."/>
            <person name="Hallmayer J."/>
            <person name="Kakulas B.A."/>
            <person name="Laing N.G."/>
        </authorList>
    </citation>
    <scope>VARIANT CMTDID TYR-35</scope>
</reference>
<reference key="44">
    <citation type="journal article" date="1999" name="Neurology">
        <title>A novel MPZ gene mutation in dominantly inherited neuropathy with focally folded myelin sheaths.</title>
        <authorList>
            <person name="Nakagawa M."/>
            <person name="Suehara M."/>
            <person name="Saito A."/>
            <person name="Takashima H."/>
            <person name="Umehara F."/>
            <person name="Saito M."/>
            <person name="Kanzato N."/>
            <person name="Matsuzaki T."/>
            <person name="Takenaga S."/>
            <person name="Sakoda S."/>
            <person name="Izumo S."/>
            <person name="Osame M."/>
        </authorList>
    </citation>
    <scope>VARIANT CMT1B PHE-62</scope>
</reference>
<reference key="45">
    <citation type="journal article" date="1999" name="Neuromuscul. Disord.">
        <title>Peripheral myelin modification in CMT1B correlates with MPZ gene mutations.</title>
        <authorList>
            <person name="Lagueny A."/>
            <person name="Latour P."/>
            <person name="Vital A."/>
            <person name="Rajabally Y."/>
            <person name="Le Masson G."/>
            <person name="Ferrer X."/>
            <person name="Bernard I."/>
            <person name="Julien J."/>
            <person name="Vital C."/>
            <person name="Vandenberghe A."/>
        </authorList>
    </citation>
    <scope>VARIANT CMT1B ASN-109</scope>
    <scope>FUNCTION</scope>
</reference>
<reference key="46">
    <citation type="journal article" date="2000" name="Acta Neuropathol.">
        <title>Focally folded myelin in Charcot-Marie-Tooth neuropathy type 1B with Ser49Leu in the myelin protein zero.</title>
        <authorList>
            <person name="Fabrizi G.M."/>
            <person name="Taioli F."/>
            <person name="Cavallaro T."/>
            <person name="Rigatelli F."/>
            <person name="Simonati A."/>
            <person name="Mariani G."/>
            <person name="Perrone P."/>
            <person name="Rizzuto N."/>
        </authorList>
    </citation>
    <scope>VARIANT CMT1B LEU-78</scope>
</reference>
<reference key="47">
    <citation type="journal article" date="2000" name="Brain Pathol.">
        <title>Charcot-Marie-Tooth neuropathy type 2 and P0 point mutations: two novel amino acid substitutions (Asp61Gly; Tyr119Cys) and a possible 'hotspot' on Thr124Met.</title>
        <authorList>
            <person name="Senderek J."/>
            <person name="Hermanns B."/>
            <person name="Lehmann U."/>
            <person name="Bergmann C."/>
            <person name="Marx G."/>
            <person name="Kabus C."/>
            <person name="Timmerman V."/>
            <person name="Stoltenburg-Didinger G."/>
            <person name="Schroder J.M."/>
        </authorList>
    </citation>
    <scope>VARIANTS CMT2I GLY-61 AND CYS-119</scope>
</reference>
<reference key="48">
    <citation type="journal article" date="2000" name="Hum. Mutat.">
        <title>Screening for mutations in the peripheral myelin genes PMP22, MPZ and Cx32 (GJB1) in Russian Charcot-Marie-Tooth neuropathy patients.</title>
        <authorList>
            <person name="Mersiyanova I.V."/>
            <person name="Ismailov S.M."/>
            <person name="Polyakov A.V."/>
            <person name="Dadali E.L."/>
            <person name="Fedotov V.P."/>
            <person name="Nelis E."/>
            <person name="Loefgren A."/>
            <person name="Timmerman V."/>
            <person name="Van Broeckhoven C."/>
            <person name="Evgrafov O.V."/>
        </authorList>
    </citation>
    <scope>VARIANTS CMT1B HIS-98; GLY-134; GLU-134; THR-135; ASN-138 AND ASN-139</scope>
</reference>
<reference key="49">
    <citation type="journal article" date="2000" name="Hum. Mutat.">
        <title>Mutations in the peripheral myelin protein zero and connexin32 genes detected by non-isotopic RNase cleavage assay and their phenotypes in Japanese patients with Charcot-Marie-Tooth disease.</title>
        <authorList>
            <person name="Yoshihara T."/>
            <person name="Yamamoto M."/>
            <person name="Doyu M."/>
            <person name="Misu K."/>
            <person name="Hattori N."/>
            <person name="Hasegawa Y."/>
            <person name="Mokuno K."/>
            <person name="Mitsuma T."/>
            <person name="Sobue G."/>
        </authorList>
    </citation>
    <scope>VARIANTS CMT PHE-32; CYS-68; MET-124 AND ARG-130</scope>
</reference>
<reference key="50">
    <citation type="journal article" date="2000" name="J. Neurol. Neurosurg. Psych.">
        <title>An axonal form of Charcot-Marie-Tooth disease showing distinctive features in association with mutations in the peripheral myelin protein zero gene (Thr124Met or Asp75Val).</title>
        <authorList>
            <person name="Misu K."/>
            <person name="Yoshihara T."/>
            <person name="Shikama Y."/>
            <person name="Awaki E."/>
            <person name="Yamamoto M."/>
            <person name="Hattori N."/>
            <person name="Hirayama M."/>
            <person name="Takegami T."/>
            <person name="Nakashima K."/>
            <person name="Sobue G."/>
        </authorList>
    </citation>
    <scope>VARIANTS CMT2J VAL-75 AND MET-124</scope>
</reference>
<reference key="51">
    <citation type="journal article" date="2001" name="Hum. Mutat.">
        <title>Charcot-Marie-Tooth disease type I and related demyelinating neuropathies: mutation analysis in a large cohort of Italian families.</title>
        <authorList>
            <person name="Mostacciuolo M.L."/>
            <person name="Righetti E."/>
            <person name="Zortea M."/>
            <person name="Bosello V."/>
            <person name="Schiavon F."/>
            <person name="Vallo L."/>
            <person name="Merlini L."/>
            <person name="Siciliano G."/>
            <person name="Fabrizi G.M."/>
            <person name="Rizzuto N."/>
            <person name="Milani M."/>
            <person name="Baratta S."/>
            <person name="Taroni F."/>
        </authorList>
    </citation>
    <scope>VARIANTS CMT1B PHE-63 AND MET-124</scope>
    <scope>VARIANTS DSS CYS-98 AND 124-THR-PHE-125 DEL</scope>
</reference>
<reference key="52">
    <citation type="journal article" date="2001" name="J. Neurol.">
        <title>Mutation analysis in Chariot-Marie Tooth disease type 1: point mutations in the MPZ gene and the GJB1 gene cause comparable phenotypic heterogeneity.</title>
        <authorList>
            <person name="Young P."/>
            <person name="Grote K."/>
            <person name="Kuhlenbaeumer G."/>
            <person name="Debus O."/>
            <person name="Kurlemann H."/>
            <person name="Halfter H."/>
            <person name="Funke H."/>
            <person name="Ringelstein E.B."/>
            <person name="Stoegbauer F."/>
        </authorList>
    </citation>
    <scope>VARIANTS CMT1B PHE-51; LEU-78 AND HIS-98</scope>
</reference>
<reference key="53">
    <citation type="journal article" date="2001" name="J. Neurol.">
        <title>The range of chronic demyelinating neuropathy of infancy: a clinico-pathological and genetic study of 15 unrelated cases.</title>
        <authorList>
            <person name="Plante-Bordeneuve V."/>
            <person name="Parman Y."/>
            <person name="Guiochon-Mantel A."/>
            <person name="Alj Y."/>
            <person name="Deymeer F."/>
            <person name="Serdaroglu P."/>
            <person name="Eraksoy M."/>
            <person name="Said G."/>
        </authorList>
    </citation>
    <scope>VARIANTS DSS VAL-42 DEL AND THR-221</scope>
</reference>
<reference key="54">
    <citation type="journal article" date="2001" name="Neurology">
        <title>A somatic and germline mosaic mutation in MPZ/P(0) mimics recessive inheritance of CMT1B.</title>
        <authorList>
            <person name="Fabrizi G.M."/>
            <person name="Ferrarini M."/>
            <person name="Cavallaro T."/>
            <person name="Jarre L."/>
            <person name="Polo A."/>
            <person name="Rizzuto N."/>
        </authorList>
    </citation>
    <scope>VARIANT CMT1B GLU-103</scope>
</reference>
<reference key="55">
    <citation type="journal article" date="2002" name="Ann. Neurol.">
        <title>Charcot-Marie-Tooth disease and related neuropathies: mutation distribution and genotype-phenotype correlation.</title>
        <authorList>
            <person name="Boerkoel C.F."/>
            <person name="Takashima H."/>
            <person name="Garcia C.A."/>
            <person name="Olney R.K."/>
            <person name="Johnson J."/>
            <person name="Berry K."/>
            <person name="Russo P."/>
            <person name="Kennedy S."/>
            <person name="Teebi A.S."/>
            <person name="Scavina M."/>
            <person name="Williams L.L."/>
            <person name="Mancias P."/>
            <person name="Butler I.J."/>
            <person name="Krajewski K."/>
            <person name="Shy M."/>
            <person name="Lupski J.R."/>
        </authorList>
    </citation>
    <scope>VARIANTS CMT1B LEU-78 AND CYS-82</scope>
    <scope>VARIANTS CMT2I ASN-89; MET-92 AND MET-162</scope>
    <scope>VARIANTS DSS CYS-123 AND GLU-136</scope>
</reference>
<reference key="56">
    <citation type="journal article" date="2002" name="Hum. Mutat.">
        <title>Molecular analysis in Japanese patients with Charcot-Marie-Tooth disease: DGGE analysis for PMP22, MPZ, and Cx32/GJB1 mutations.</title>
        <authorList>
            <person name="Numakura C."/>
            <person name="Lin C."/>
            <person name="Ikegami T."/>
            <person name="Guldberg P."/>
            <person name="Hayasaka K."/>
        </authorList>
    </citation>
    <scope>VARIANTS CMT1B SER-63 DEL; ILE-65; CYS-68; CYS-82; MET-124; ARG-163 AND ARG-170</scope>
    <scope>VARIANTS CMT2I VAL-75 AND ILE-113</scope>
</reference>
<reference key="57">
    <citation type="journal article" date="2002" name="Neurology">
        <title>Corticosteroid-responsive asymmetric neuropathy with a myelin protein zero gene mutation.</title>
        <authorList>
            <person name="Watanabe M."/>
            <person name="Yamamoto N."/>
            <person name="Ohkoshi N."/>
            <person name="Nagata H."/>
            <person name="Kohno Y."/>
            <person name="Hayashi A."/>
            <person name="Tamaoka A."/>
            <person name="Shoji S."/>
        </authorList>
    </citation>
    <scope>VARIANT CMT1B HIS-98</scope>
</reference>
<reference key="58">
    <citation type="journal article" date="2002" name="Neuromuscul. Disord.">
        <title>Two amino-acid substitutions in the myelin protein zero gene of a case of Charcot-Marie-Tooth disease associated with light-near dissociation.</title>
        <authorList>
            <person name="Bienfait H.M.E."/>
            <person name="Baas F."/>
            <person name="Gabreeels-Festen A.A.W.M."/>
            <person name="Koelman J.H.T.M."/>
            <person name="Langerhorst C.T."/>
            <person name="de Visser M."/>
        </authorList>
    </citation>
    <scope>VARIANTS CMTDID TYR-81 AND PHE-113</scope>
</reference>
<reference key="59">
    <citation type="journal article" date="2002" name="Neuromuscul. Disord.">
        <title>Charcot-Marie-Tooth neuropathy: clinical phenotypes of four novel mutations in the MPZ and Cx 32 genes.</title>
        <authorList>
            <person name="Street V.A."/>
            <person name="Meekins G."/>
            <person name="Lipe H.P."/>
            <person name="Seltzer W.K."/>
            <person name="Carter G.T."/>
            <person name="Kraft G.H."/>
            <person name="Bird T.D."/>
        </authorList>
    </citation>
    <scope>VARIANTS CMT1B THR-140; ARG-163 AND LYS-236 DEL</scope>
</reference>
<reference key="60">
    <citation type="journal article" date="2003" name="Brain">
        <title>Demyelinating and axonal features of Charcot-Marie-Tooth disease with mutations of myelin-related proteins (PMP22, MPZ and Cx32): a clinicopathological study of 205 Japanese patients.</title>
        <authorList>
            <consortium name="The study group for hereditary neuropathy in Japan"/>
            <person name="Hattori N."/>
            <person name="Yamamoto M."/>
            <person name="Yoshihara T."/>
            <person name="Koike H."/>
            <person name="Nakagawa M."/>
            <person name="Yoshikawa H."/>
            <person name="Ohnishi A."/>
            <person name="Hayasaka K."/>
            <person name="Onodera O."/>
            <person name="Baba M."/>
            <person name="Yasuda H."/>
            <person name="Saito T."/>
            <person name="Nakashima K."/>
            <person name="Kira J."/>
            <person name="Kaji R."/>
            <person name="Oka N."/>
            <person name="Sobue G."/>
        </authorList>
    </citation>
    <scope>VARIANTS CMT1B TYR-35; PHE-62; SER-63 DEL; CYS-68; GLU-93; CYS-98 AND PHE-146</scope>
    <scope>VARIANTS CMT2I VAL-75; ARG-81; MET-124; ARG-130 AND ARG-167</scope>
</reference>
<reference key="61">
    <citation type="journal article" date="2003" name="Hum. Mutat.">
        <title>Novel mutations in the Charcot-Marie-Tooth disease genes PMP22, MPZ, and GJB1.</title>
        <authorList>
            <person name="Huehne K."/>
            <person name="Benes V."/>
            <person name="Thiel C."/>
            <person name="Kraus C."/>
            <person name="Kress W."/>
            <person name="Hoeltzenbein M."/>
            <person name="Ploner C.J."/>
            <person name="Kotzian J."/>
            <person name="Reis A."/>
            <person name="Rott H.D."/>
            <person name="Rautenstrauss B.W."/>
        </authorList>
    </citation>
    <scope>VARIANT CMT1B LEU-78</scope>
    <scope>VARIANT DSS ASP-110</scope>
</reference>
<reference key="62">
    <citation type="journal article" date="2003" name="Muscle Nerve">
        <title>Clinical and genetic analysis of CMT1B in a Nigerian family.</title>
        <authorList>
            <person name="Kakar R."/>
            <person name="Ma W."/>
            <person name="Dutra A."/>
            <person name="Seltzer W.K."/>
            <person name="Grewal R.P."/>
        </authorList>
    </citation>
    <scope>VARIANT CMT1B TRP-78</scope>
</reference>
<reference key="63">
    <citation type="journal article" date="2003" name="Neurogenetics">
        <title>Charcot-Marie-Tooth disease: a novel Tyr145Ser mutation in the myelin protein zero (MPZ, P0) gene causes different phenotypes in homozygous and heterozygous carriers within one family.</title>
        <authorList>
            <person name="Leal A."/>
            <person name="Berghoff C."/>
            <person name="Berghoff M."/>
            <person name="Del Valle G."/>
            <person name="Contreras C."/>
            <person name="Montoya O."/>
            <person name="Hernandez E."/>
            <person name="Barrantes R."/>
            <person name="Schloetzer-Schrehardt U."/>
            <person name="Neundoerfer B."/>
            <person name="Reis A."/>
            <person name="Rautenstrauss B."/>
            <person name="Heuss D."/>
        </authorList>
    </citation>
    <scope>VARIANT CMT1B SER-145</scope>
</reference>
<reference key="64">
    <citation type="journal article" date="2003" name="Neurology">
        <title>Late onset Charcot-Marie-Tooth 2 syndrome caused by two novel mutations in the MPZ gene.</title>
        <authorList>
            <person name="Auer-Grumbach M."/>
            <person name="Strasser-Fuchs S."/>
            <person name="Robl T."/>
            <person name="Windpassinger C."/>
            <person name="Wagner K."/>
        </authorList>
    </citation>
    <scope>VARIANTS CMT2I HIS-60 AND MET-62</scope>
</reference>
<reference key="65">
    <citation type="journal article" date="2004" name="Brain">
        <title>Phenotypic clustering in MPZ mutations.</title>
        <authorList>
            <person name="Shy M.E."/>
            <person name="Jani A."/>
            <person name="Krajewski K."/>
            <person name="Grandis M."/>
            <person name="Lewis R.A."/>
            <person name="Li J."/>
            <person name="Shy R.R."/>
            <person name="Balsamo J."/>
            <person name="Lilien J."/>
            <person name="Garbern J.Y."/>
            <person name="Kamholz J."/>
        </authorList>
    </citation>
    <scope>VARIANTS CMT1B PRO-39; PHE-44; CYS-50 DEL; HIS-98; CYS-123; ARG-130; THR-140 AND SER-227</scope>
</reference>
<reference key="66">
    <citation type="journal article" date="2004" name="J. Peripher. Nerv. Syst.">
        <title>An axonal form of Charcot-Marie-Tooth disease with a novel missense mutation in the myelin protein zero gene.</title>
        <authorList>
            <person name="Kochanski A."/>
            <person name="Kabzinska D."/>
            <person name="Nowakowski A."/>
            <person name="Drac H."/>
            <person name="Hausmanowa-Petrusewicz I."/>
        </authorList>
    </citation>
    <scope>VARIANT CMT2I LYS-56</scope>
</reference>
<reference key="67">
    <citation type="journal article" date="2004" name="Hum. Mutat.">
        <title>Mutational analysis of PMP22, MPZ, GJB1, EGR2 and NEFL in Korean Charcot-Marie-Tooth neuropathy patients.</title>
        <authorList>
            <person name="Choi B.-O."/>
            <person name="Lee M.S."/>
            <person name="Shin S.H."/>
            <person name="Hwang J.H."/>
            <person name="Choi K.-G."/>
            <person name="Kim W.-K."/>
            <person name="Sunwoo I.N."/>
            <person name="Kim N.K."/>
            <person name="Chung K.W."/>
        </authorList>
    </citation>
    <scope>VARIANTS CMT2I ASN-118 AND GLU-236</scope>
</reference>
<reference key="68">
    <citation type="journal article" date="2004" name="Neurology">
        <title>A novel MPZ gene mutation in congenital neuropathy with hypomyelination.</title>
        <authorList>
            <person name="Kochanski A."/>
            <person name="Drac H."/>
            <person name="Kabzinska D."/>
            <person name="Ryniewicz B."/>
            <person name="Rowinska-Marcinska K."/>
            <person name="Nowakowski A."/>
            <person name="Hausmanowa-Petrusewicz I."/>
        </authorList>
    </citation>
    <scope>VARIANT CHN2 LYS-124</scope>
</reference>
<reference key="69">
    <citation type="journal article" date="2004" name="Neurology">
        <title>Hearing loss as the first feature of late-onset axonal CMT disease due to a novel P0 mutation.</title>
        <authorList>
            <person name="Seeman P."/>
            <person name="Mazanec R."/>
            <person name="Huehne K."/>
            <person name="Suslikova P."/>
            <person name="Keller O."/>
            <person name="Rautenstrauss B."/>
        </authorList>
    </citation>
    <scope>VARIANT CMT2J VAL-97</scope>
</reference>
<reference key="70">
    <citation type="journal article" date="2006" name="Neuromuscul. Disord.">
        <title>Gene dosage sensitivity of a novel mutation in the intracellular domain of P0 associated with Charcot-Marie-Tooth disease type 1B.</title>
        <authorList>
            <person name="Fabrizi G.M."/>
            <person name="Pellegrini M."/>
            <person name="Angiari C."/>
            <person name="Cavallaro T."/>
            <person name="Morini A."/>
            <person name="Taioli F."/>
            <person name="Cabrini I."/>
            <person name="Orrico D."/>
            <person name="Rizzuto N."/>
        </authorList>
    </citation>
    <scope>VARIANT CMT1B TYR-224</scope>
</reference>
<reference key="71">
    <citation type="journal article" date="2008" name="Hum. Mol. Genet.">
        <title>Different cellular and molecular mechanisms for early and late-onset myelin protein zero mutations.</title>
        <authorList>
            <person name="Grandis M."/>
            <person name="Vigo T."/>
            <person name="Passalacqua M."/>
            <person name="Jain M."/>
            <person name="Scazzola S."/>
            <person name="La Padula V."/>
            <person name="Brucal M."/>
            <person name="Benvenuto F."/>
            <person name="Nobbio L."/>
            <person name="Cadoni A."/>
            <person name="Mancardi G.L."/>
            <person name="Kamholz J."/>
            <person name="Shy M.E."/>
            <person name="Schenone A."/>
        </authorList>
    </citation>
    <scope>CHARACTERIZATION OF VARIANTS CMT1B 51-SER--TRP-57 DEL; PRO-39; ARG-81 AND MET-124</scope>
    <scope>FUNCTION</scope>
    <scope>SUBCELLULAR LOCATION</scope>
</reference>
<reference key="72">
    <citation type="journal article" date="2004" name="Neurology">
        <title>Chronic cough due to Thr124Met mutation in the peripheral myelin protein zero (MPZ gene).</title>
        <authorList>
            <person name="Baloh R.H."/>
            <person name="Jen J.C."/>
            <person name="Kim G."/>
            <person name="Baloh R.W."/>
        </authorList>
    </citation>
    <scope>VARIANT CMT2 MET-124</scope>
</reference>
<reference key="73">
    <citation type="journal article" date="2004" name="Neuromuscul. Disord.">
        <title>A novel mutation, Thr65Ala, in the MPZ gene in a patient with Charcot-Marie-Tooth type 1B disease with focally folded myelin.</title>
        <authorList>
            <person name="Kochanski A."/>
            <person name="Drac H."/>
            <person name="Kabzinska D."/>
            <person name="Hausmanowa-Petrusewicz I."/>
        </authorList>
    </citation>
    <scope>VARIANT CMT1B ALA-65</scope>
</reference>
<reference key="74">
    <citation type="journal article" date="2006" name="N. Engl. J. Med.">
        <title>Case records of the Massachusetts General Hospital. Case 18-2006. A 57-year-old woman with numbness and weakness of the feet and legs.</title>
        <authorList>
            <person name="Triggs W.J."/>
            <person name="Brown R.H. Jr."/>
            <person name="Menkes D.L."/>
        </authorList>
    </citation>
    <scope>VARIANT CMT2J MET-124</scope>
    <scope>INVOLVEMENT IN ADIE PUPIL</scope>
</reference>
<gene>
    <name type="primary">MPZ</name>
</gene>